<organism>
    <name type="scientific">Homo sapiens</name>
    <name type="common">Human</name>
    <dbReference type="NCBI Taxonomy" id="9606"/>
    <lineage>
        <taxon>Eukaryota</taxon>
        <taxon>Metazoa</taxon>
        <taxon>Chordata</taxon>
        <taxon>Craniata</taxon>
        <taxon>Vertebrata</taxon>
        <taxon>Euteleostomi</taxon>
        <taxon>Mammalia</taxon>
        <taxon>Eutheria</taxon>
        <taxon>Euarchontoglires</taxon>
        <taxon>Primates</taxon>
        <taxon>Haplorrhini</taxon>
        <taxon>Catarrhini</taxon>
        <taxon>Hominidae</taxon>
        <taxon>Homo</taxon>
    </lineage>
</organism>
<evidence type="ECO:0000250" key="1">
    <source>
        <dbReference type="UniProtKB" id="O35826"/>
    </source>
</evidence>
<evidence type="ECO:0000250" key="2">
    <source>
        <dbReference type="UniProtKB" id="Q91WG8"/>
    </source>
</evidence>
<evidence type="ECO:0000269" key="3">
    <source>
    </source>
</evidence>
<evidence type="ECO:0000269" key="4">
    <source>
    </source>
</evidence>
<evidence type="ECO:0000269" key="5">
    <source>
    </source>
</evidence>
<evidence type="ECO:0000269" key="6">
    <source>
    </source>
</evidence>
<evidence type="ECO:0000269" key="7">
    <source>
    </source>
</evidence>
<evidence type="ECO:0000269" key="8">
    <source>
    </source>
</evidence>
<evidence type="ECO:0000269" key="9">
    <source>
    </source>
</evidence>
<evidence type="ECO:0000269" key="10">
    <source>
    </source>
</evidence>
<evidence type="ECO:0000269" key="11">
    <source>
    </source>
</evidence>
<evidence type="ECO:0000269" key="12">
    <source>
    </source>
</evidence>
<evidence type="ECO:0000269" key="13">
    <source>
    </source>
</evidence>
<evidence type="ECO:0000269" key="14">
    <source>
    </source>
</evidence>
<evidence type="ECO:0000269" key="15">
    <source>
    </source>
</evidence>
<evidence type="ECO:0000269" key="16">
    <source>
    </source>
</evidence>
<evidence type="ECO:0000269" key="17">
    <source>
    </source>
</evidence>
<evidence type="ECO:0000269" key="18">
    <source>
    </source>
</evidence>
<evidence type="ECO:0000269" key="19">
    <source>
    </source>
</evidence>
<evidence type="ECO:0000269" key="20">
    <source>
    </source>
</evidence>
<evidence type="ECO:0000269" key="21">
    <source>
    </source>
</evidence>
<evidence type="ECO:0000269" key="22">
    <source>
    </source>
</evidence>
<evidence type="ECO:0000269" key="23">
    <source>
    </source>
</evidence>
<evidence type="ECO:0000269" key="24">
    <source>
    </source>
</evidence>
<evidence type="ECO:0000269" key="25">
    <source>
    </source>
</evidence>
<evidence type="ECO:0000269" key="26">
    <source>
    </source>
</evidence>
<evidence type="ECO:0000269" key="27">
    <source>
    </source>
</evidence>
<evidence type="ECO:0000269" key="28">
    <source>
    </source>
</evidence>
<evidence type="ECO:0000269" key="29">
    <source>
    </source>
</evidence>
<evidence type="ECO:0000269" key="30">
    <source>
    </source>
</evidence>
<evidence type="ECO:0000269" key="31">
    <source>
    </source>
</evidence>
<evidence type="ECO:0000269" key="32">
    <source>
    </source>
</evidence>
<evidence type="ECO:0000269" key="33">
    <source>
    </source>
</evidence>
<evidence type="ECO:0000303" key="34">
    <source>
    </source>
</evidence>
<evidence type="ECO:0000303" key="35">
    <source>
    </source>
</evidence>
<evidence type="ECO:0000303" key="36">
    <source>
    </source>
</evidence>
<evidence type="ECO:0000303" key="37">
    <source ref="5"/>
</evidence>
<evidence type="ECO:0000305" key="38"/>
<evidence type="ECO:0000305" key="39">
    <source>
    </source>
</evidence>
<evidence type="ECO:0000312" key="40">
    <source>
        <dbReference type="HGNC" id="HGNC:23657"/>
    </source>
</evidence>
<evidence type="ECO:0007744" key="41">
    <source>
        <dbReference type="PDB" id="2YHW"/>
    </source>
</evidence>
<evidence type="ECO:0007744" key="42">
    <source>
        <dbReference type="PDB" id="2YHY"/>
    </source>
</evidence>
<evidence type="ECO:0007744" key="43">
    <source>
        <dbReference type="PDB" id="2YI1"/>
    </source>
</evidence>
<evidence type="ECO:0007744" key="44">
    <source>
        <dbReference type="PDB" id="3EO3"/>
    </source>
</evidence>
<evidence type="ECO:0007744" key="45">
    <source>
        <dbReference type="PDB" id="4ZHT"/>
    </source>
</evidence>
<evidence type="ECO:0007829" key="46">
    <source>
        <dbReference type="PDB" id="2YHW"/>
    </source>
</evidence>
<evidence type="ECO:0007829" key="47">
    <source>
        <dbReference type="PDB" id="4ZHT"/>
    </source>
</evidence>
<reference key="1">
    <citation type="journal article" date="1999" name="FEBS Lett.">
        <title>Primary structure and expression analysis of human UDP-N-acetyl-glucosamine-2-epimerase/N-acetylmannosamine kinase, the bifunctional enzyme in neuraminic acid biosynthesis.</title>
        <authorList>
            <person name="Lucka L."/>
            <person name="Krause M."/>
            <person name="Danker K."/>
            <person name="Reutter W."/>
            <person name="Horstkorte R."/>
        </authorList>
    </citation>
    <scope>NUCLEOTIDE SEQUENCE [MRNA] (ISOFORM 1)</scope>
    <scope>TISSUE SPECIFICITY</scope>
    <source>
        <tissue>Liver</tissue>
    </source>
</reference>
<reference key="2">
    <citation type="journal article" date="1999" name="Am. J. Hum. Genet.">
        <title>Mutations in the human UDP-N-acetylglucosamine 2-epimerase gene define the disease sialuria and the allosteric site of the enzyme.</title>
        <authorList>
            <person name="Seppala R."/>
            <person name="Lehto V.-P."/>
            <person name="Gahl W.A."/>
        </authorList>
    </citation>
    <scope>NUCLEOTIDE SEQUENCE [MRNA] (ISOFORM 1)</scope>
    <scope>TISSUE SPECIFICITY</scope>
    <scope>VARIANTS SIALURIA LEU-263; GLN-266 AND TRP-266</scope>
</reference>
<reference key="3">
    <citation type="submission" date="1999-06" db="EMBL/GenBank/DDBJ databases">
        <authorList>
            <person name="Wang S.S."/>
            <person name="Ryll T."/>
        </authorList>
    </citation>
    <scope>NUCLEOTIDE SEQUENCE [MRNA] (ISOFORM 1)</scope>
    <source>
        <tissue>Small intestine</tissue>
    </source>
</reference>
<reference key="4">
    <citation type="submission" date="2000-10" db="EMBL/GenBank/DDBJ databases">
        <title>Organization of the human UDP-N-acetylglucosamine 2-epimerase gene and characterization of a related pseudogene; relevance for mutation detection in patients with sialuria.</title>
        <authorList>
            <person name="Huizing M."/>
            <person name="Anikster Y."/>
            <person name="Gahl W.A."/>
        </authorList>
    </citation>
    <scope>NUCLEOTIDE SEQUENCE [GENOMIC DNA] (ISOFORM 1)</scope>
</reference>
<reference key="5">
    <citation type="submission" date="2007-08" db="EMBL/GenBank/DDBJ databases">
        <title>mRNA analysis revealed splice mutation and expression alteration of GNE gene in distal myopathy with rimmed vacuoles (DMRV) patients.</title>
        <authorList>
            <person name="Pramono Z.A.D."/>
            <person name="Lai P.S."/>
            <person name="Seah I.A.L."/>
            <person name="Ong B."/>
            <person name="Yee W.C."/>
        </authorList>
    </citation>
    <scope>NUCLEOTIDE SEQUENCE [MRNA] (ISOFORM 4)</scope>
</reference>
<reference key="6">
    <citation type="journal article" date="2004" name="Nat. Genet.">
        <title>Complete sequencing and characterization of 21,243 full-length human cDNAs.</title>
        <authorList>
            <person name="Ota T."/>
            <person name="Suzuki Y."/>
            <person name="Nishikawa T."/>
            <person name="Otsuki T."/>
            <person name="Sugiyama T."/>
            <person name="Irie R."/>
            <person name="Wakamatsu A."/>
            <person name="Hayashi K."/>
            <person name="Sato H."/>
            <person name="Nagai K."/>
            <person name="Kimura K."/>
            <person name="Makita H."/>
            <person name="Sekine M."/>
            <person name="Obayashi M."/>
            <person name="Nishi T."/>
            <person name="Shibahara T."/>
            <person name="Tanaka T."/>
            <person name="Ishii S."/>
            <person name="Yamamoto J."/>
            <person name="Saito K."/>
            <person name="Kawai Y."/>
            <person name="Isono Y."/>
            <person name="Nakamura Y."/>
            <person name="Nagahari K."/>
            <person name="Murakami K."/>
            <person name="Yasuda T."/>
            <person name="Iwayanagi T."/>
            <person name="Wagatsuma M."/>
            <person name="Shiratori A."/>
            <person name="Sudo H."/>
            <person name="Hosoiri T."/>
            <person name="Kaku Y."/>
            <person name="Kodaira H."/>
            <person name="Kondo H."/>
            <person name="Sugawara M."/>
            <person name="Takahashi M."/>
            <person name="Kanda K."/>
            <person name="Yokoi T."/>
            <person name="Furuya T."/>
            <person name="Kikkawa E."/>
            <person name="Omura Y."/>
            <person name="Abe K."/>
            <person name="Kamihara K."/>
            <person name="Katsuta N."/>
            <person name="Sato K."/>
            <person name="Tanikawa M."/>
            <person name="Yamazaki M."/>
            <person name="Ninomiya K."/>
            <person name="Ishibashi T."/>
            <person name="Yamashita H."/>
            <person name="Murakawa K."/>
            <person name="Fujimori K."/>
            <person name="Tanai H."/>
            <person name="Kimata M."/>
            <person name="Watanabe M."/>
            <person name="Hiraoka S."/>
            <person name="Chiba Y."/>
            <person name="Ishida S."/>
            <person name="Ono Y."/>
            <person name="Takiguchi S."/>
            <person name="Watanabe S."/>
            <person name="Yosida M."/>
            <person name="Hotuta T."/>
            <person name="Kusano J."/>
            <person name="Kanehori K."/>
            <person name="Takahashi-Fujii A."/>
            <person name="Hara H."/>
            <person name="Tanase T.-O."/>
            <person name="Nomura Y."/>
            <person name="Togiya S."/>
            <person name="Komai F."/>
            <person name="Hara R."/>
            <person name="Takeuchi K."/>
            <person name="Arita M."/>
            <person name="Imose N."/>
            <person name="Musashino K."/>
            <person name="Yuuki H."/>
            <person name="Oshima A."/>
            <person name="Sasaki N."/>
            <person name="Aotsuka S."/>
            <person name="Yoshikawa Y."/>
            <person name="Matsunawa H."/>
            <person name="Ichihara T."/>
            <person name="Shiohata N."/>
            <person name="Sano S."/>
            <person name="Moriya S."/>
            <person name="Momiyama H."/>
            <person name="Satoh N."/>
            <person name="Takami S."/>
            <person name="Terashima Y."/>
            <person name="Suzuki O."/>
            <person name="Nakagawa S."/>
            <person name="Senoh A."/>
            <person name="Mizoguchi H."/>
            <person name="Goto Y."/>
            <person name="Shimizu F."/>
            <person name="Wakebe H."/>
            <person name="Hishigaki H."/>
            <person name="Watanabe T."/>
            <person name="Sugiyama A."/>
            <person name="Takemoto M."/>
            <person name="Kawakami B."/>
            <person name="Yamazaki M."/>
            <person name="Watanabe K."/>
            <person name="Kumagai A."/>
            <person name="Itakura S."/>
            <person name="Fukuzumi Y."/>
            <person name="Fujimori Y."/>
            <person name="Komiyama M."/>
            <person name="Tashiro H."/>
            <person name="Tanigami A."/>
            <person name="Fujiwara T."/>
            <person name="Ono T."/>
            <person name="Yamada K."/>
            <person name="Fujii Y."/>
            <person name="Ozaki K."/>
            <person name="Hirao M."/>
            <person name="Ohmori Y."/>
            <person name="Kawabata A."/>
            <person name="Hikiji T."/>
            <person name="Kobatake N."/>
            <person name="Inagaki H."/>
            <person name="Ikema Y."/>
            <person name="Okamoto S."/>
            <person name="Okitani R."/>
            <person name="Kawakami T."/>
            <person name="Noguchi S."/>
            <person name="Itoh T."/>
            <person name="Shigeta K."/>
            <person name="Senba T."/>
            <person name="Matsumura K."/>
            <person name="Nakajima Y."/>
            <person name="Mizuno T."/>
            <person name="Morinaga M."/>
            <person name="Sasaki M."/>
            <person name="Togashi T."/>
            <person name="Oyama M."/>
            <person name="Hata H."/>
            <person name="Watanabe M."/>
            <person name="Komatsu T."/>
            <person name="Mizushima-Sugano J."/>
            <person name="Satoh T."/>
            <person name="Shirai Y."/>
            <person name="Takahashi Y."/>
            <person name="Nakagawa K."/>
            <person name="Okumura K."/>
            <person name="Nagase T."/>
            <person name="Nomura N."/>
            <person name="Kikuchi H."/>
            <person name="Masuho Y."/>
            <person name="Yamashita R."/>
            <person name="Nakai K."/>
            <person name="Yada T."/>
            <person name="Nakamura Y."/>
            <person name="Ohara O."/>
            <person name="Isogai T."/>
            <person name="Sugano S."/>
        </authorList>
    </citation>
    <scope>NUCLEOTIDE SEQUENCE [LARGE SCALE MRNA] (ISOFORMS 1 AND 5)</scope>
    <scope>NUCLEOTIDE SEQUENCE [MRNA] OF 24-694 (ISOFORM 3)</scope>
    <source>
        <tissue>Hippocampus</tissue>
        <tissue>Tongue</tissue>
    </source>
</reference>
<reference key="7">
    <citation type="journal article" date="2007" name="FEBS Lett.">
        <title>Prediction of three different isoforms of the human UDP-N-acetylglucosamine 2-epimerase/N-acetylmannosamine kinase.</title>
        <authorList>
            <person name="Reinke S.O."/>
            <person name="Hinderlich S."/>
        </authorList>
    </citation>
    <scope>NUCLEOTIDE SEQUENCE [MRNA] (ISOFORM 2)</scope>
    <scope>NUCLEOTIDE SEQUENCE [MRNA] OF 37-694 (ISOFORM 3)</scope>
    <scope>TISSUE SPECIFICITY</scope>
</reference>
<reference key="8">
    <citation type="journal article" date="2004" name="Nature">
        <title>DNA sequence and analysis of human chromosome 9.</title>
        <authorList>
            <person name="Humphray S.J."/>
            <person name="Oliver K."/>
            <person name="Hunt A.R."/>
            <person name="Plumb R.W."/>
            <person name="Loveland J.E."/>
            <person name="Howe K.L."/>
            <person name="Andrews T.D."/>
            <person name="Searle S."/>
            <person name="Hunt S.E."/>
            <person name="Scott C.E."/>
            <person name="Jones M.C."/>
            <person name="Ainscough R."/>
            <person name="Almeida J.P."/>
            <person name="Ambrose K.D."/>
            <person name="Ashwell R.I.S."/>
            <person name="Babbage A.K."/>
            <person name="Babbage S."/>
            <person name="Bagguley C.L."/>
            <person name="Bailey J."/>
            <person name="Banerjee R."/>
            <person name="Barker D.J."/>
            <person name="Barlow K.F."/>
            <person name="Bates K."/>
            <person name="Beasley H."/>
            <person name="Beasley O."/>
            <person name="Bird C.P."/>
            <person name="Bray-Allen S."/>
            <person name="Brown A.J."/>
            <person name="Brown J.Y."/>
            <person name="Burford D."/>
            <person name="Burrill W."/>
            <person name="Burton J."/>
            <person name="Carder C."/>
            <person name="Carter N.P."/>
            <person name="Chapman J.C."/>
            <person name="Chen Y."/>
            <person name="Clarke G."/>
            <person name="Clark S.Y."/>
            <person name="Clee C.M."/>
            <person name="Clegg S."/>
            <person name="Collier R.E."/>
            <person name="Corby N."/>
            <person name="Crosier M."/>
            <person name="Cummings A.T."/>
            <person name="Davies J."/>
            <person name="Dhami P."/>
            <person name="Dunn M."/>
            <person name="Dutta I."/>
            <person name="Dyer L.W."/>
            <person name="Earthrowl M.E."/>
            <person name="Faulkner L."/>
            <person name="Fleming C.J."/>
            <person name="Frankish A."/>
            <person name="Frankland J.A."/>
            <person name="French L."/>
            <person name="Fricker D.G."/>
            <person name="Garner P."/>
            <person name="Garnett J."/>
            <person name="Ghori J."/>
            <person name="Gilbert J.G.R."/>
            <person name="Glison C."/>
            <person name="Grafham D.V."/>
            <person name="Gribble S."/>
            <person name="Griffiths C."/>
            <person name="Griffiths-Jones S."/>
            <person name="Grocock R."/>
            <person name="Guy J."/>
            <person name="Hall R.E."/>
            <person name="Hammond S."/>
            <person name="Harley J.L."/>
            <person name="Harrison E.S.I."/>
            <person name="Hart E.A."/>
            <person name="Heath P.D."/>
            <person name="Henderson C.D."/>
            <person name="Hopkins B.L."/>
            <person name="Howard P.J."/>
            <person name="Howden P.J."/>
            <person name="Huckle E."/>
            <person name="Johnson C."/>
            <person name="Johnson D."/>
            <person name="Joy A.A."/>
            <person name="Kay M."/>
            <person name="Keenan S."/>
            <person name="Kershaw J.K."/>
            <person name="Kimberley A.M."/>
            <person name="King A."/>
            <person name="Knights A."/>
            <person name="Laird G.K."/>
            <person name="Langford C."/>
            <person name="Lawlor S."/>
            <person name="Leongamornlert D.A."/>
            <person name="Leversha M."/>
            <person name="Lloyd C."/>
            <person name="Lloyd D.M."/>
            <person name="Lovell J."/>
            <person name="Martin S."/>
            <person name="Mashreghi-Mohammadi M."/>
            <person name="Matthews L."/>
            <person name="McLaren S."/>
            <person name="McLay K.E."/>
            <person name="McMurray A."/>
            <person name="Milne S."/>
            <person name="Nickerson T."/>
            <person name="Nisbett J."/>
            <person name="Nordsiek G."/>
            <person name="Pearce A.V."/>
            <person name="Peck A.I."/>
            <person name="Porter K.M."/>
            <person name="Pandian R."/>
            <person name="Pelan S."/>
            <person name="Phillimore B."/>
            <person name="Povey S."/>
            <person name="Ramsey Y."/>
            <person name="Rand V."/>
            <person name="Scharfe M."/>
            <person name="Sehra H.K."/>
            <person name="Shownkeen R."/>
            <person name="Sims S.K."/>
            <person name="Skuce C.D."/>
            <person name="Smith M."/>
            <person name="Steward C.A."/>
            <person name="Swarbreck D."/>
            <person name="Sycamore N."/>
            <person name="Tester J."/>
            <person name="Thorpe A."/>
            <person name="Tracey A."/>
            <person name="Tromans A."/>
            <person name="Thomas D.W."/>
            <person name="Wall M."/>
            <person name="Wallis J.M."/>
            <person name="West A.P."/>
            <person name="Whitehead S.L."/>
            <person name="Willey D.L."/>
            <person name="Williams S.A."/>
            <person name="Wilming L."/>
            <person name="Wray P.W."/>
            <person name="Young L."/>
            <person name="Ashurst J.L."/>
            <person name="Coulson A."/>
            <person name="Blocker H."/>
            <person name="Durbin R.M."/>
            <person name="Sulston J.E."/>
            <person name="Hubbard T."/>
            <person name="Jackson M.J."/>
            <person name="Bentley D.R."/>
            <person name="Beck S."/>
            <person name="Rogers J."/>
            <person name="Dunham I."/>
        </authorList>
    </citation>
    <scope>NUCLEOTIDE SEQUENCE [LARGE SCALE GENOMIC DNA]</scope>
</reference>
<reference key="9">
    <citation type="submission" date="2005-09" db="EMBL/GenBank/DDBJ databases">
        <authorList>
            <person name="Mural R.J."/>
            <person name="Istrail S."/>
            <person name="Sutton G.G."/>
            <person name="Florea L."/>
            <person name="Halpern A.L."/>
            <person name="Mobarry C.M."/>
            <person name="Lippert R."/>
            <person name="Walenz B."/>
            <person name="Shatkay H."/>
            <person name="Dew I."/>
            <person name="Miller J.R."/>
            <person name="Flanigan M.J."/>
            <person name="Edwards N.J."/>
            <person name="Bolanos R."/>
            <person name="Fasulo D."/>
            <person name="Halldorsson B.V."/>
            <person name="Hannenhalli S."/>
            <person name="Turner R."/>
            <person name="Yooseph S."/>
            <person name="Lu F."/>
            <person name="Nusskern D.R."/>
            <person name="Shue B.C."/>
            <person name="Zheng X.H."/>
            <person name="Zhong F."/>
            <person name="Delcher A.L."/>
            <person name="Huson D.H."/>
            <person name="Kravitz S.A."/>
            <person name="Mouchard L."/>
            <person name="Reinert K."/>
            <person name="Remington K.A."/>
            <person name="Clark A.G."/>
            <person name="Waterman M.S."/>
            <person name="Eichler E.E."/>
            <person name="Adams M.D."/>
            <person name="Hunkapiller M.W."/>
            <person name="Myers E.W."/>
            <person name="Venter J.C."/>
        </authorList>
    </citation>
    <scope>NUCLEOTIDE SEQUENCE [LARGE SCALE GENOMIC DNA]</scope>
</reference>
<reference key="10">
    <citation type="journal article" date="2004" name="Genome Res.">
        <title>The status, quality, and expansion of the NIH full-length cDNA project: the Mammalian Gene Collection (MGC).</title>
        <authorList>
            <consortium name="The MGC Project Team"/>
        </authorList>
    </citation>
    <scope>NUCLEOTIDE SEQUENCE [LARGE SCALE MRNA] (ISOFORM 1)</scope>
</reference>
<reference key="11">
    <citation type="journal article" date="1989" name="J. Biol. Chem.">
        <title>Identification of the metabolic defect in sialuria.</title>
        <authorList>
            <person name="Weiss P."/>
            <person name="Tietze F."/>
            <person name="Gahl W.A."/>
            <person name="Seppala R."/>
            <person name="Ashwell G."/>
        </authorList>
    </citation>
    <scope>FUNCTION</scope>
    <scope>CATALYTIC ACTIVITY</scope>
    <scope>ACTIVITY REGULATION</scope>
    <scope>INVOLVEMENT IN SIALURIA</scope>
</reference>
<reference key="12">
    <citation type="journal article" date="1999" name="Science">
        <title>UDP-GlcNAc 2-epimerase: a regulator of cell surface sialylation.</title>
        <authorList>
            <person name="Keppler O.T."/>
            <person name="Hinderlich S."/>
            <person name="Langner J."/>
            <person name="Schwartz-Albiez R."/>
            <person name="Reutter W."/>
            <person name="Pawlita M."/>
        </authorList>
    </citation>
    <scope>FUNCTION</scope>
</reference>
<reference key="13">
    <citation type="journal article" date="2011" name="BMC Syst. Biol.">
        <title>Initial characterization of the human central proteome.</title>
        <authorList>
            <person name="Burkard T.R."/>
            <person name="Planyavsky M."/>
            <person name="Kaupe I."/>
            <person name="Breitwieser F.P."/>
            <person name="Buerckstuemmer T."/>
            <person name="Bennett K.L."/>
            <person name="Superti-Furga G."/>
            <person name="Colinge J."/>
        </authorList>
    </citation>
    <scope>IDENTIFICATION BY MASS SPECTROMETRY [LARGE SCALE ANALYSIS]</scope>
</reference>
<reference key="14">
    <citation type="journal article" date="2014" name="J. Proteomics">
        <title>An enzyme assisted RP-RPLC approach for in-depth analysis of human liver phosphoproteome.</title>
        <authorList>
            <person name="Bian Y."/>
            <person name="Song C."/>
            <person name="Cheng K."/>
            <person name="Dong M."/>
            <person name="Wang F."/>
            <person name="Huang J."/>
            <person name="Sun D."/>
            <person name="Wang L."/>
            <person name="Ye M."/>
            <person name="Zou H."/>
        </authorList>
    </citation>
    <scope>IDENTIFICATION BY MASS SPECTROMETRY [LARGE SCALE ANALYSIS]</scope>
    <source>
        <tissue>Liver</tissue>
    </source>
</reference>
<reference evidence="44" key="15">
    <citation type="journal article" date="2009" name="PLoS ONE">
        <title>Crystal structure of the N-acetylmannosamine kinase domain of GNE.</title>
        <authorList>
            <person name="Tong Y."/>
            <person name="Tempel W."/>
            <person name="Nedyalkova L."/>
            <person name="Mackenzie F."/>
            <person name="Park H.W."/>
        </authorList>
    </citation>
    <scope>X-RAY CRYSTALLOGRAPHY (2.84 ANGSTROMS) OF 406-720 IN COMPLEX WITH ZINC</scope>
    <scope>SUBUNIT</scope>
</reference>
<reference evidence="41 42 43" key="16">
    <citation type="journal article" date="2012" name="J. Biol. Chem.">
        <title>Crystal structures of N-acetylmannosamine kinase provide insights into enzyme activity and inhibition.</title>
        <authorList>
            <person name="Martinez J."/>
            <person name="Nguyen L.D."/>
            <person name="Hinderlich S."/>
            <person name="Zimmer R."/>
            <person name="Tauberger E."/>
            <person name="Reutter W."/>
            <person name="Saenger W."/>
            <person name="Fan H."/>
            <person name="Moniot S."/>
        </authorList>
    </citation>
    <scope>X-RAY CRYSTALLOGRAPHY (1.64 ANGSTROMS) OF 406-720 IN COMPLEX WITH N-ACYL-D-MANNOSAMINE; N-ACYL-D-MANNOSAMINE 6-PHOSPHATE; ADP; MAGNESIUM AND ZINC</scope>
    <scope>ZINC-BINDING SITES</scope>
    <scope>ACTIVE SITE</scope>
    <scope>SUBUNIT</scope>
    <scope>MUTAGENESIS OF ASP-517</scope>
    <scope>CHARACTERIZATION OF VARIANTS SER-519; CYS-528; THR-587; VAL-631; THR-631 AND THR-712</scope>
</reference>
<reference evidence="45" key="17">
    <citation type="journal article" date="2016" name="Sci. Rep.">
        <title>Mechanism and inhibition of human UDP-GlcNAc 2-epimerase, the key enzyme in sialic acid biosynthesis.</title>
        <authorList>
            <person name="Chen S.C."/>
            <person name="Huang C.H."/>
            <person name="Lai S.J."/>
            <person name="Yang C.S."/>
            <person name="Hsiao T.H."/>
            <person name="Lin C.H."/>
            <person name="Fu P.K."/>
            <person name="Ko T.P."/>
            <person name="Chen Y."/>
        </authorList>
    </citation>
    <scope>X-RAY CRYSTALLOGRAPHY (2.69 ANGSTROMS) OF 1-405 IN COMPLEX WITH CYTIDINE-5'-MONOPHOSPHATE-5-N-ACETYLNEURAMINIC ACID AND UDP</scope>
    <scope>CATALYTIC ACTIVITY</scope>
    <scope>ACTIVITY REGULATION</scope>
</reference>
<reference key="18">
    <citation type="journal article" date="1999" name="Mol. Genet. Metab.">
        <title>Sialuria in a Portuguese girl: clinical, biochemical, and molecular characteristics.</title>
        <authorList>
            <person name="Ferreira H."/>
            <person name="Seppala R."/>
            <person name="Pinto R."/>
            <person name="Huizing M."/>
            <person name="Martins E."/>
            <person name="Braga A.C."/>
            <person name="Gomes L."/>
            <person name="Krasnewich D.M."/>
            <person name="Sa Miranda M.C."/>
            <person name="Gahl W.A."/>
        </authorList>
    </citation>
    <scope>VARIANT SIALURIA GLN-266</scope>
</reference>
<reference key="19">
    <citation type="journal article" date="2001" name="Am. J. Hum. Genet.">
        <title>Dominant inheritance of sialuria, an inborn error of feedback inhibition.</title>
        <authorList>
            <person name="Leroy J.G."/>
            <person name="Seppala R."/>
            <person name="Huizing M."/>
            <person name="Dacremont G."/>
            <person name="De Simpel H."/>
            <person name="Van Coster R.N."/>
            <person name="Orvisky E."/>
            <person name="Krasnewich D.M."/>
            <person name="Gahl W.A."/>
        </authorList>
    </citation>
    <scope>CHARACTERIZATION OF VARIANT SIALURIA GLN-266</scope>
    <scope>FUNCTION</scope>
    <scope>CATALYTIC ACTIVITY</scope>
</reference>
<reference key="20">
    <citation type="journal article" date="2001" name="Nat. Genet.">
        <title>The UDP-N-acetylglucosamine 2-epimerase/N-acetylmannosamine kinase gene is mutated in recessive hereditary inclusion body myopathy.</title>
        <authorList>
            <person name="Eisenberg I."/>
            <person name="Avidan N."/>
            <person name="Potikha T."/>
            <person name="Hochner H."/>
            <person name="Chen M."/>
            <person name="Olender T."/>
            <person name="Barash M."/>
            <person name="Shemesh M."/>
            <person name="Sadeh M."/>
            <person name="Grabov-Nardini G."/>
            <person name="Shmilevich I."/>
            <person name="Friedmann A."/>
            <person name="Karpati G."/>
            <person name="Bradley W.G."/>
            <person name="Baumbach L."/>
            <person name="Lancet D."/>
            <person name="Asher E.B."/>
            <person name="Beckmann J.S."/>
            <person name="Argov Z."/>
            <person name="Mitrani-Rosenbaum S."/>
        </authorList>
    </citation>
    <scope>VARIANTS NM ASN-225; GLN-246; GLU-576; THR-631; MET-696 AND THR-712</scope>
</reference>
<reference key="21">
    <citation type="journal article" date="2002" name="Ann. Neurol.">
        <title>A novel mutation in the GNE gene and a linkage disequilibrium in Japanese pedigrees.</title>
        <authorList>
            <person name="Arai A."/>
            <person name="Tanaka K."/>
            <person name="Ikeuchi T."/>
            <person name="Igarashi S."/>
            <person name="Kobayashi H."/>
            <person name="Asaka T."/>
            <person name="Date H."/>
            <person name="Saito M."/>
            <person name="Tanaka H."/>
            <person name="Kawasaki S."/>
            <person name="Uyama E."/>
            <person name="Mizusawa H."/>
            <person name="Fukuhara N."/>
            <person name="Tsuji S."/>
        </authorList>
    </citation>
    <scope>VARIANT NM LEU-572</scope>
</reference>
<reference key="22">
    <citation type="journal article" date="2002" name="J. Hum. Genet.">
        <title>Nonaka myopathy is caused by mutations in the UDP-N-acetylglucosamine-2-epimerase/N-acetylmannosamine kinase gene (GNE).</title>
        <authorList>
            <person name="Kayashima T."/>
            <person name="Matsuo H."/>
            <person name="Satoh A."/>
            <person name="Ohta T."/>
            <person name="Yoshiura K."/>
            <person name="Matsumoto N."/>
            <person name="Nakane Y."/>
            <person name="Niikawa N."/>
            <person name="Kishino T."/>
        </authorList>
    </citation>
    <scope>VARIANTS NM VAL-460 AND LEU-572</scope>
</reference>
<reference key="23">
    <citation type="journal article" date="2002" name="Mol. Genet. Metab.">
        <title>Four novel mutations associated with autosomal recessive inclusion body myopathy (MIM: 600737).</title>
        <authorList>
            <person name="Darvish D."/>
            <person name="Vahedifar P."/>
            <person name="Huo Y."/>
        </authorList>
    </citation>
    <scope>VARIANTS NM ASN-225; GLN-246; TRP-246; VAL-460; VAL-524; LEU-572; GLU-576; THR-631; HIS-675; MET-696 AND THR-712</scope>
</reference>
<reference key="24">
    <citation type="journal article" date="2002" name="Neurology">
        <title>Distal myopathy with rimmed vacuoles: novel mutations in the GNE gene.</title>
        <authorList>
            <person name="Tomimitsu H."/>
            <person name="Ishikawa K."/>
            <person name="Shimizu J."/>
            <person name="Ohkoshi N."/>
            <person name="Kanazawa I."/>
            <person name="Mizusawa H."/>
        </authorList>
    </citation>
    <scope>VARIANTS NM LEU-572 AND VAL-631</scope>
</reference>
<reference key="25">
    <citation type="journal article" date="2002" name="Neurology">
        <title>Distal myopathy with rimmed vacuoles is allelic to hereditary inclusion body myopathy.</title>
        <authorList>
            <person name="Nishino I."/>
            <person name="Noguchi S."/>
            <person name="Murayama K."/>
            <person name="Driss A."/>
            <person name="Sugie K."/>
            <person name="Oya Y."/>
            <person name="Nagata T."/>
            <person name="Chida K."/>
            <person name="Takahashi T."/>
            <person name="Takusa Y."/>
            <person name="Ohi T."/>
            <person name="Nishimiya J."/>
            <person name="Sunohara N."/>
            <person name="Ciafaloni E."/>
            <person name="Kawai M."/>
            <person name="Aoki M."/>
            <person name="Nonaka I."/>
        </authorList>
    </citation>
    <scope>VARIANTS NM GLN-132; VAL-176; CYS-177; GLN-306; ALA-331; TYR-378; THR-472; LEU-572; THR-630 AND VAL-631</scope>
</reference>
<reference key="26">
    <citation type="journal article" date="2002" name="Neurology">
        <title>GNE mutations in an American family with quadriceps-sparing IBM and lack of mutations in s-IBM.</title>
        <authorList>
            <person name="Vasconcelos O.M."/>
            <person name="Raju R."/>
            <person name="Dalakas M.C."/>
        </authorList>
    </citation>
    <scope>VARIANTS NM ALA-216 AND VAL-631</scope>
</reference>
<reference key="27">
    <citation type="journal article" date="2002" name="Neurology">
        <title>An Italian family with autosomal recessive inclusion-body myopathy and mutations in the GNE gene.</title>
        <authorList>
            <person name="Broccolini A."/>
            <person name="Pescatori M."/>
            <person name="D'Amico A."/>
            <person name="Sabino A."/>
            <person name="Silvestri G."/>
            <person name="Ricci E."/>
            <person name="Servidei S."/>
            <person name="Tonali P.A."/>
            <person name="Mirabella M."/>
        </authorList>
    </citation>
    <scope>VARIANTS NM VAL-171 AND THR-712</scope>
</reference>
<reference key="28">
    <citation type="journal article" date="2003" name="Hum. Mutat.">
        <title>Mutations spectrum of GNE in hereditary inclusion body myopathy sparing the quadriceps.</title>
        <authorList>
            <person name="Eisenberg I."/>
            <person name="Grabov-Nardini G."/>
            <person name="Hochner H."/>
            <person name="Korner M."/>
            <person name="Sadeh M."/>
            <person name="Bertorini T."/>
            <person name="Bushby K."/>
            <person name="Castellan C."/>
            <person name="Felice K."/>
            <person name="Mendell J."/>
            <person name="Merlini L."/>
            <person name="Shilling C."/>
            <person name="Wirguin I."/>
            <person name="Argov Z."/>
            <person name="Mitrani-Rosenbaum S."/>
        </authorList>
    </citation>
    <scope>VARIANTS NM LEU-36; PHE-200; ASN-225; GLN-246; VAL-303; TYR-378; VAL-460; CYS-528; THR-557; LEU-572; GLU-576; THR-587; THR-631; VAL-631; MET-696 AND THR-712</scope>
</reference>
<reference key="29">
    <citation type="journal article" date="2003" name="Muscle Nerve">
        <title>Novel missense mutation and large deletion of GNE gene in autosomal-recessive inclusion-body myopathy.</title>
        <authorList>
            <person name="Del Bo R."/>
            <person name="Baron P."/>
            <person name="Prelle A."/>
            <person name="Serafini M."/>
            <person name="Moggio M."/>
            <person name="Di Fonzo A."/>
            <person name="Castagni M."/>
            <person name="Bresolin N."/>
            <person name="Comi G.P."/>
        </authorList>
    </citation>
    <scope>VARIANT NM CYS-162</scope>
</reference>
<reference key="30">
    <citation type="journal article" date="2003" name="Neurology">
        <title>GNE mutations causing distal myopathy with rimmed vacuoles with inflammation.</title>
        <authorList>
            <person name="Yabe I."/>
            <person name="Higashi T."/>
            <person name="Kikuchi S."/>
            <person name="Sasaki H."/>
            <person name="Fukazawa T."/>
            <person name="Yoshida K."/>
            <person name="Tashiro K."/>
        </authorList>
    </citation>
    <scope>VARIANTS NM THR-472 AND LEU-572</scope>
</reference>
<reference key="31">
    <citation type="journal article" date="2004" name="J. Biol. Chem.">
        <title>Reduction of UDP-N-acetylglucosamine 2-epimerase/N-acetylmannosamine kinase activity and sialylation in distal myopathy with rimmed vacuoles.</title>
        <authorList>
            <person name="Noguchi S."/>
            <person name="Keira Y."/>
            <person name="Murayama K."/>
            <person name="Ogawa M."/>
            <person name="Fujita M."/>
            <person name="Kawahara G."/>
            <person name="Oya Y."/>
            <person name="Imazawa M."/>
            <person name="Goto Y."/>
            <person name="Hayashi Y.K."/>
            <person name="Nonaka I."/>
            <person name="Nishino I."/>
        </authorList>
    </citation>
    <scope>VARIANTS NM SER-13; VAL-176; VAL-524; LEU-572 AND SER-708</scope>
    <scope>CHARACTERIZATION OF VARIANTS NM SER-13; GLN-132; VAL-176; CYS-177; ALA-331; TYR-378; THR-472; VAL-524; LEU-572; THR-630; VAL-631 AND SER-708</scope>
    <scope>FUNCTION</scope>
    <scope>CATALYTIC ACTIVITY</scope>
    <scope>PATHWAY</scope>
</reference>
<reference key="32">
    <citation type="journal article" date="2004" name="Hum. Mutat.">
        <title>Novel GNE mutations in Italian families with autosomal recessive hereditary inclusion-body myopathy.</title>
        <authorList>
            <person name="Broccolini A."/>
            <person name="Ricci E."/>
            <person name="Cassandrini D."/>
            <person name="Gliubizzi C."/>
            <person name="Bruno C."/>
            <person name="Tonoli E."/>
            <person name="Silvestri G."/>
            <person name="Pescatori M."/>
            <person name="Rodolico C."/>
            <person name="Sinicropi S."/>
            <person name="Servidei S."/>
            <person name="Zara F."/>
            <person name="Minetti C."/>
            <person name="Tonali P.A."/>
            <person name="Mirabella M."/>
        </authorList>
    </citation>
    <scope>VARIANTS NM SER-27; SER-206; GLN-246; SER-519 AND THR-600</scope>
</reference>
<reference key="33">
    <citation type="journal article" date="2006" name="Biochemistry">
        <title>Influence of UDP-GlcNAc 2-epimerase/ManNAc kinase mutant proteins on hereditary inclusion body myopathy.</title>
        <authorList>
            <person name="Penner J."/>
            <person name="Mantey L.R."/>
            <person name="Elgavish S."/>
            <person name="Ghaderi D."/>
            <person name="Cirak S."/>
            <person name="Berger M."/>
            <person name="Krause S."/>
            <person name="Lucka L."/>
            <person name="Voit T."/>
            <person name="Mitrani-Rosenbaum S."/>
            <person name="Hinderlich S."/>
        </authorList>
    </citation>
    <scope>CHARACTERIZATION OF VARIANTS NM TYR-378; SER-519; CYS-528; GLU-576 AND THR-587</scope>
    <scope>FUNCTION</scope>
    <scope>CATALYTIC ACTIVITY</scope>
    <scope>PATHWAY</scope>
</reference>
<reference key="34">
    <citation type="journal article" date="2014" name="Neuromuscul. Disord.">
        <title>GNE myopathy associated with congenital thrombocytopenia: a report of two siblings.</title>
        <authorList>
            <person name="Izumi R."/>
            <person name="Niihori T."/>
            <person name="Suzuki N."/>
            <person name="Sasahara Y."/>
            <person name="Rikiishi T."/>
            <person name="Nishiyama A."/>
            <person name="Nishiyama S."/>
            <person name="Endo K."/>
            <person name="Kato M."/>
            <person name="Warita H."/>
            <person name="Konno H."/>
            <person name="Takahashi T."/>
            <person name="Tateyama M."/>
            <person name="Nagashima T."/>
            <person name="Funayama R."/>
            <person name="Nakayama K."/>
            <person name="Kure S."/>
            <person name="Matsubara Y."/>
            <person name="Aoki Y."/>
            <person name="Aoki M."/>
        </authorList>
    </citation>
    <scope>VARIANTS THC12 LEU-572 AND SER-708</scope>
    <scope>INVOLVEMENT IN THC12</scope>
</reference>
<reference key="35">
    <citation type="journal article" date="2018" name="Blood">
        <title>GNE variants causing autosomal recessive macrothrombocytopenia without associated muscle wasting.</title>
        <authorList>
            <person name="Revel-Vilk S."/>
            <person name="Shai E."/>
            <person name="Turro E."/>
            <person name="Jahshan N."/>
            <person name="Hi-Am E."/>
            <person name="Spectre G."/>
            <person name="Daum H."/>
            <person name="Kalish Y."/>
            <person name="Althaus K."/>
            <person name="Greinacher A."/>
            <person name="Kaplinsky C."/>
            <person name="Izraeli S."/>
            <person name="Mapeta R."/>
            <person name="Deevi S.V.V."/>
            <person name="Jarocha D."/>
            <person name="Ouwehand W.H."/>
            <person name="Downes K."/>
            <person name="Poncz M."/>
            <person name="Varon D."/>
            <person name="Lambert M.P."/>
        </authorList>
    </citation>
    <scope>VARIANTS THC12 TYR-157; PHE-475; PRO-486 AND SER-519</scope>
    <scope>INVOLVEMENT IN THC12</scope>
</reference>
<reference key="36">
    <citation type="journal article" date="2020" name="BMC Med. Genet.">
        <title>Congenital thrombocytopenia associated with GNE mutations in twin sisters: a case report and literature review.</title>
        <authorList>
            <person name="Li X."/>
            <person name="Li Y."/>
            <person name="Lei M."/>
            <person name="Tian J."/>
            <person name="Yang Z."/>
            <person name="Kuang S."/>
            <person name="Tan Y."/>
            <person name="Bo T."/>
        </authorList>
    </citation>
    <scope>VARIANTS THC12 TYR-413 AND 420-ARG--TYR-722 DEL</scope>
    <scope>INVOLVEMENT IN THC12</scope>
</reference>
<reference key="37">
    <citation type="journal article" date="2021" name="Front. Immunol.">
        <title>Severe Congenital Thrombocytopenia Characterized by Decreased Platelet Sialylation and Moderate Complement Activation Caused by Novel Compound Heterozygous Variants in GNE.</title>
        <authorList>
            <person name="Smolag K.I."/>
            <person name="Fager Ferrari M."/>
            <person name="Zetterberg E."/>
            <person name="Leinoe E."/>
            <person name="Ek T."/>
            <person name="Blom A.M."/>
            <person name="Rossing M."/>
            <person name="Martin M."/>
        </authorList>
    </citation>
    <scope>VARIANT THC12 GLN-420</scope>
    <scope>INVOLVEMENT IN THC12</scope>
</reference>
<reference key="38">
    <citation type="journal article" date="2022" name="Thromb. Haemost.">
        <title>Novel GNE gene variants associated with severe congenital thrombocytopenia and platelet sialylation defect.</title>
        <authorList>
            <person name="Zieger B."/>
            <person name="Boeckelmann D."/>
            <person name="Anani W."/>
            <person name="Falet H."/>
            <person name="Zhu J."/>
            <person name="Glonnegger H."/>
            <person name="Full H."/>
            <person name="Andresen F."/>
            <person name="Erlacher M."/>
            <person name="Lausch E."/>
            <person name="Fels S."/>
            <person name="Strahm B."/>
            <person name="Lang P."/>
            <person name="Hoffmeister K.M."/>
        </authorList>
    </citation>
    <scope>VARIANTS THC12 MET-417 AND GLN-420</scope>
    <scope>INVOLVEMENT IN THC12</scope>
</reference>
<reference key="39">
    <citation type="journal article" date="2022" name="Haematologica">
        <title>GNE-related thrombocytopenia: evidence for a mutational hotspot in the ADP/substrate domain of the GNE bifunctional enzyme.</title>
        <authorList>
            <person name="Bottega R."/>
            <person name="Marzollo A."/>
            <person name="Marinoni M."/>
            <person name="Athanasakis E."/>
            <person name="Persico I."/>
            <person name="Bianco A.M."/>
            <person name="Faleschini M."/>
            <person name="Valencic E."/>
            <person name="Simoncini D."/>
            <person name="Rossini L."/>
            <person name="Corsolini F."/>
            <person name="La Bianca M."/>
            <person name="Robustelli G."/>
            <person name="Gabelli M."/>
            <person name="Agosti M."/>
            <person name="Biffi A."/>
            <person name="Grotto P."/>
            <person name="Bozzi V."/>
            <person name="Noris P."/>
            <person name="Burlina A.B."/>
            <person name="D'Adamo A.P."/>
            <person name="Tommasini A."/>
            <person name="Faletra F."/>
            <person name="Pastore A."/>
            <person name="Savoia A."/>
        </authorList>
    </citation>
    <scope>VARIANTS THC12 ARG-485 AND ARG-544</scope>
    <scope>INVOLVEMENT IN THC12</scope>
</reference>
<reference key="40">
    <citation type="journal article" date="2024" name="Blood Adv.">
        <title>Novel GNE missense variants impair de novo sialylation and cause defective angiogenesis in the developing brain in mice.</title>
        <authorList>
            <person name="Huang L."/>
            <person name="Kondo Y."/>
            <person name="Cao L."/>
            <person name="Han J."/>
            <person name="Li T."/>
            <person name="Zuo B."/>
            <person name="Yang F."/>
            <person name="Li Y."/>
            <person name="Ma Z."/>
            <person name="Bai X."/>
            <person name="Jiang M."/>
            <person name="Ruan C."/>
            <person name="Xia L."/>
        </authorList>
    </citation>
    <scope>VARIANTS THC12 TYR-563 AND ARG-704</scope>
    <scope>CHARACTERIZATION OF VARIANTS THC12 TYR-563 AND ARG-704</scope>
    <scope>FUNCTION</scope>
</reference>
<dbReference type="EC" id="3.2.1.183" evidence="7 19 21 26 27"/>
<dbReference type="EC" id="2.7.1.60" evidence="19 21"/>
<dbReference type="EMBL" id="AJ238764">
    <property type="protein sequence ID" value="CAB42607.1"/>
    <property type="molecule type" value="mRNA"/>
</dbReference>
<dbReference type="EMBL" id="AF051852">
    <property type="protein sequence ID" value="AAD32251.1"/>
    <property type="molecule type" value="mRNA"/>
</dbReference>
<dbReference type="EMBL" id="AF155663">
    <property type="protein sequence ID" value="AAD38197.1"/>
    <property type="molecule type" value="mRNA"/>
</dbReference>
<dbReference type="EMBL" id="AF317635">
    <property type="protein sequence ID" value="AAG31661.1"/>
    <property type="molecule type" value="Genomic_DNA"/>
</dbReference>
<dbReference type="EMBL" id="EU093084">
    <property type="protein sequence ID" value="ABU55403.1"/>
    <property type="molecule type" value="mRNA"/>
</dbReference>
<dbReference type="EMBL" id="AK295562">
    <property type="protein sequence ID" value="BAH12108.1"/>
    <property type="molecule type" value="mRNA"/>
</dbReference>
<dbReference type="EMBL" id="AK296687">
    <property type="protein sequence ID" value="BAH12414.1"/>
    <property type="status" value="ALT_INIT"/>
    <property type="molecule type" value="mRNA"/>
</dbReference>
<dbReference type="EMBL" id="AK312539">
    <property type="protein sequence ID" value="BAG35438.1"/>
    <property type="molecule type" value="mRNA"/>
</dbReference>
<dbReference type="EMBL" id="AM697708">
    <property type="protein sequence ID" value="CAM91424.1"/>
    <property type="molecule type" value="mRNA"/>
</dbReference>
<dbReference type="EMBL" id="AM697709">
    <property type="protein sequence ID" value="CAM91425.1"/>
    <property type="molecule type" value="mRNA"/>
</dbReference>
<dbReference type="EMBL" id="AL158830">
    <property type="status" value="NOT_ANNOTATED_CDS"/>
    <property type="molecule type" value="Genomic_DNA"/>
</dbReference>
<dbReference type="EMBL" id="CH471071">
    <property type="protein sequence ID" value="EAW58307.1"/>
    <property type="molecule type" value="Genomic_DNA"/>
</dbReference>
<dbReference type="EMBL" id="CH471071">
    <property type="protein sequence ID" value="EAW58309.1"/>
    <property type="molecule type" value="Genomic_DNA"/>
</dbReference>
<dbReference type="EMBL" id="BC121179">
    <property type="protein sequence ID" value="AAI21180.1"/>
    <property type="molecule type" value="mRNA"/>
</dbReference>
<dbReference type="CCDS" id="CCDS47965.1">
    <molecule id="Q9Y223-2"/>
</dbReference>
<dbReference type="CCDS" id="CCDS55308.1">
    <molecule id="Q9Y223-5"/>
</dbReference>
<dbReference type="CCDS" id="CCDS55309.1">
    <molecule id="Q9Y223-4"/>
</dbReference>
<dbReference type="CCDS" id="CCDS6602.1">
    <molecule id="Q9Y223-1"/>
</dbReference>
<dbReference type="RefSeq" id="NP_001121699.1">
    <molecule id="Q9Y223-2"/>
    <property type="nucleotide sequence ID" value="NM_001128227.3"/>
</dbReference>
<dbReference type="RefSeq" id="NP_001177312.1">
    <molecule id="Q9Y223-4"/>
    <property type="nucleotide sequence ID" value="NM_001190383.3"/>
</dbReference>
<dbReference type="RefSeq" id="NP_001177313.1">
    <molecule id="Q9Y223-5"/>
    <property type="nucleotide sequence ID" value="NM_001190384.3"/>
</dbReference>
<dbReference type="RefSeq" id="NP_001177317.1">
    <property type="nucleotide sequence ID" value="NM_001190388.1"/>
</dbReference>
<dbReference type="RefSeq" id="NP_005467.1">
    <molecule id="Q9Y223-1"/>
    <property type="nucleotide sequence ID" value="NM_005476.7"/>
</dbReference>
<dbReference type="RefSeq" id="XP_016869656.1">
    <molecule id="Q9Y223-1"/>
    <property type="nucleotide sequence ID" value="XM_017014167.1"/>
</dbReference>
<dbReference type="RefSeq" id="XP_054217668.1">
    <molecule id="Q9Y223-1"/>
    <property type="nucleotide sequence ID" value="XM_054361693.1"/>
</dbReference>
<dbReference type="PDB" id="2YHW">
    <property type="method" value="X-ray"/>
    <property type="resolution" value="1.64 A"/>
    <property type="chains" value="A=406-720"/>
</dbReference>
<dbReference type="PDB" id="2YHY">
    <property type="method" value="X-ray"/>
    <property type="resolution" value="1.82 A"/>
    <property type="chains" value="A=406-720"/>
</dbReference>
<dbReference type="PDB" id="2YI1">
    <property type="method" value="X-ray"/>
    <property type="resolution" value="2.15 A"/>
    <property type="chains" value="A=406-720"/>
</dbReference>
<dbReference type="PDB" id="3EO3">
    <property type="method" value="X-ray"/>
    <property type="resolution" value="2.84 A"/>
    <property type="chains" value="A/B/C=406-720"/>
</dbReference>
<dbReference type="PDB" id="4ZHT">
    <property type="method" value="X-ray"/>
    <property type="resolution" value="2.69 A"/>
    <property type="chains" value="A/B/C/D=1-405"/>
</dbReference>
<dbReference type="PDBsum" id="2YHW"/>
<dbReference type="PDBsum" id="2YHY"/>
<dbReference type="PDBsum" id="2YI1"/>
<dbReference type="PDBsum" id="3EO3"/>
<dbReference type="PDBsum" id="4ZHT"/>
<dbReference type="SMR" id="Q9Y223"/>
<dbReference type="BioGRID" id="115337">
    <property type="interactions" value="104"/>
</dbReference>
<dbReference type="FunCoup" id="Q9Y223">
    <property type="interactions" value="707"/>
</dbReference>
<dbReference type="IntAct" id="Q9Y223">
    <property type="interactions" value="71"/>
</dbReference>
<dbReference type="STRING" id="9606.ENSP00000379839"/>
<dbReference type="BindingDB" id="Q9Y223"/>
<dbReference type="ChEMBL" id="CHEMBL4523504"/>
<dbReference type="iPTMnet" id="Q9Y223"/>
<dbReference type="MetOSite" id="Q9Y223"/>
<dbReference type="PhosphoSitePlus" id="Q9Y223"/>
<dbReference type="BioMuta" id="GNE"/>
<dbReference type="DMDM" id="45476991"/>
<dbReference type="jPOST" id="Q9Y223"/>
<dbReference type="MassIVE" id="Q9Y223"/>
<dbReference type="PaxDb" id="9606-ENSP00000379839"/>
<dbReference type="PeptideAtlas" id="Q9Y223"/>
<dbReference type="ProteomicsDB" id="38009"/>
<dbReference type="ProteomicsDB" id="85604">
    <molecule id="Q9Y223-1"/>
</dbReference>
<dbReference type="ProteomicsDB" id="85605">
    <molecule id="Q9Y223-2"/>
</dbReference>
<dbReference type="ProteomicsDB" id="85606">
    <molecule id="Q9Y223-3"/>
</dbReference>
<dbReference type="ProteomicsDB" id="85607">
    <molecule id="Q9Y223-4"/>
</dbReference>
<dbReference type="ProteomicsDB" id="85608">
    <molecule id="Q9Y223-5"/>
</dbReference>
<dbReference type="Pumba" id="Q9Y223"/>
<dbReference type="Antibodypedia" id="2058">
    <property type="antibodies" value="245 antibodies from 28 providers"/>
</dbReference>
<dbReference type="DNASU" id="10020"/>
<dbReference type="Ensembl" id="ENST00000396594.8">
    <molecule id="Q9Y223-2"/>
    <property type="protein sequence ID" value="ENSP00000379839.3"/>
    <property type="gene ID" value="ENSG00000159921.20"/>
</dbReference>
<dbReference type="Ensembl" id="ENST00000447283.6">
    <molecule id="Q9Y223-4"/>
    <property type="protein sequence ID" value="ENSP00000414760.2"/>
    <property type="gene ID" value="ENSG00000159921.20"/>
</dbReference>
<dbReference type="Ensembl" id="ENST00000539208.5">
    <molecule id="Q9Y223-5"/>
    <property type="protein sequence ID" value="ENSP00000445117.1"/>
    <property type="gene ID" value="ENSG00000159921.20"/>
</dbReference>
<dbReference type="Ensembl" id="ENST00000642385.2">
    <molecule id="Q9Y223-1"/>
    <property type="protein sequence ID" value="ENSP00000494141.2"/>
    <property type="gene ID" value="ENSG00000159921.20"/>
</dbReference>
<dbReference type="GeneID" id="10020"/>
<dbReference type="KEGG" id="hsa:10020"/>
<dbReference type="MANE-Select" id="ENST00000642385.2">
    <property type="protein sequence ID" value="ENSP00000494141.2"/>
    <property type="RefSeq nucleotide sequence ID" value="NM_005476.7"/>
    <property type="RefSeq protein sequence ID" value="NP_005467.1"/>
</dbReference>
<dbReference type="UCSC" id="uc010mlg.5">
    <molecule id="Q9Y223-1"/>
    <property type="organism name" value="human"/>
</dbReference>
<dbReference type="AGR" id="HGNC:23657"/>
<dbReference type="CTD" id="10020"/>
<dbReference type="DisGeNET" id="10020"/>
<dbReference type="GeneCards" id="GNE"/>
<dbReference type="GeneReviews" id="GNE"/>
<dbReference type="HGNC" id="HGNC:23657">
    <property type="gene designation" value="GNE"/>
</dbReference>
<dbReference type="HPA" id="ENSG00000159921">
    <property type="expression patterns" value="Group enriched (intestine, liver, salivary gland)"/>
</dbReference>
<dbReference type="MalaCards" id="GNE"/>
<dbReference type="MIM" id="269921">
    <property type="type" value="phenotype"/>
</dbReference>
<dbReference type="MIM" id="600737">
    <property type="type" value="phenotype"/>
</dbReference>
<dbReference type="MIM" id="603824">
    <property type="type" value="gene"/>
</dbReference>
<dbReference type="MIM" id="605820">
    <property type="type" value="phenotype"/>
</dbReference>
<dbReference type="MIM" id="620757">
    <property type="type" value="phenotype"/>
</dbReference>
<dbReference type="neXtProt" id="NX_Q9Y223"/>
<dbReference type="OpenTargets" id="ENSG00000159921"/>
<dbReference type="Orphanet" id="602">
    <property type="disease" value="GNE myopathy"/>
</dbReference>
<dbReference type="Orphanet" id="438207">
    <property type="disease" value="Severe autosomal recessive macrothrombocytopenia"/>
</dbReference>
<dbReference type="Orphanet" id="3166">
    <property type="disease" value="Sialuria"/>
</dbReference>
<dbReference type="PharmGKB" id="PA134987566"/>
<dbReference type="VEuPathDB" id="HostDB:ENSG00000159921"/>
<dbReference type="eggNOG" id="ENOG502QUGI">
    <property type="taxonomic scope" value="Eukaryota"/>
</dbReference>
<dbReference type="GeneTree" id="ENSGT00390000017246"/>
<dbReference type="HOGENOM" id="CLU_023411_0_0_1"/>
<dbReference type="InParanoid" id="Q9Y223"/>
<dbReference type="OrthoDB" id="2968753at2759"/>
<dbReference type="PAN-GO" id="Q9Y223">
    <property type="GO annotations" value="2 GO annotations based on evolutionary models"/>
</dbReference>
<dbReference type="PhylomeDB" id="Q9Y223"/>
<dbReference type="TreeFam" id="TF332239"/>
<dbReference type="BRENDA" id="2.7.1.60">
    <property type="organism ID" value="2681"/>
</dbReference>
<dbReference type="BRENDA" id="3.2.1.183">
    <property type="organism ID" value="2681"/>
</dbReference>
<dbReference type="BRENDA" id="5.1.3.14">
    <property type="organism ID" value="2681"/>
</dbReference>
<dbReference type="PathwayCommons" id="Q9Y223"/>
<dbReference type="Reactome" id="R-HSA-4085001">
    <property type="pathway name" value="Sialic acid metabolism"/>
</dbReference>
<dbReference type="Reactome" id="R-HSA-4085011">
    <property type="pathway name" value="Defective GNE causes sialuria, NK and IBM2"/>
</dbReference>
<dbReference type="SignaLink" id="Q9Y223"/>
<dbReference type="SIGNOR" id="Q9Y223"/>
<dbReference type="UniPathway" id="UPA00630"/>
<dbReference type="BioGRID-ORCS" id="10020">
    <property type="hits" value="42 hits in 1169 CRISPR screens"/>
</dbReference>
<dbReference type="ChiTaRS" id="GNE">
    <property type="organism name" value="human"/>
</dbReference>
<dbReference type="EvolutionaryTrace" id="Q9Y223"/>
<dbReference type="GeneWiki" id="GNE_(gene)"/>
<dbReference type="GenomeRNAi" id="10020"/>
<dbReference type="Pharos" id="Q9Y223">
    <property type="development level" value="Tbio"/>
</dbReference>
<dbReference type="PRO" id="PR:Q9Y223"/>
<dbReference type="Proteomes" id="UP000005640">
    <property type="component" value="Chromosome 9"/>
</dbReference>
<dbReference type="RNAct" id="Q9Y223">
    <property type="molecule type" value="protein"/>
</dbReference>
<dbReference type="Bgee" id="ENSG00000159921">
    <property type="expression patterns" value="Expressed in mucosa of sigmoid colon and 207 other cell types or tissues"/>
</dbReference>
<dbReference type="GO" id="GO:0005829">
    <property type="term" value="C:cytosol"/>
    <property type="evidence" value="ECO:0000250"/>
    <property type="project" value="UniProtKB"/>
</dbReference>
<dbReference type="GO" id="GO:0005524">
    <property type="term" value="F:ATP binding"/>
    <property type="evidence" value="ECO:0007669"/>
    <property type="project" value="UniProtKB-KW"/>
</dbReference>
<dbReference type="GO" id="GO:0004553">
    <property type="term" value="F:hydrolase activity, hydrolyzing O-glycosyl compounds"/>
    <property type="evidence" value="ECO:0007669"/>
    <property type="project" value="InterPro"/>
</dbReference>
<dbReference type="GO" id="GO:0046872">
    <property type="term" value="F:metal ion binding"/>
    <property type="evidence" value="ECO:0007669"/>
    <property type="project" value="UniProtKB-KW"/>
</dbReference>
<dbReference type="GO" id="GO:0009384">
    <property type="term" value="F:N-acylmannosamine kinase activity"/>
    <property type="evidence" value="ECO:0000315"/>
    <property type="project" value="UniProtKB"/>
</dbReference>
<dbReference type="GO" id="GO:0008761">
    <property type="term" value="F:UDP-N-acetylglucosamine 2-epimerase activity"/>
    <property type="evidence" value="ECO:0000314"/>
    <property type="project" value="UniProtKB"/>
</dbReference>
<dbReference type="GO" id="GO:0006055">
    <property type="term" value="P:CMP-N-acetylneuraminate biosynthetic process"/>
    <property type="evidence" value="ECO:0000315"/>
    <property type="project" value="FlyBase"/>
</dbReference>
<dbReference type="GO" id="GO:0070085">
    <property type="term" value="P:glycosylation"/>
    <property type="evidence" value="ECO:0000315"/>
    <property type="project" value="FlyBase"/>
</dbReference>
<dbReference type="GO" id="GO:0006045">
    <property type="term" value="P:N-acetylglucosamine biosynthetic process"/>
    <property type="evidence" value="ECO:0007669"/>
    <property type="project" value="UniProtKB-UniPathway"/>
</dbReference>
<dbReference type="GO" id="GO:0046380">
    <property type="term" value="P:N-acetylneuraminate biosynthetic process"/>
    <property type="evidence" value="ECO:0000315"/>
    <property type="project" value="UniProtKB"/>
</dbReference>
<dbReference type="GO" id="GO:0006047">
    <property type="term" value="P:UDP-N-acetylglucosamine metabolic process"/>
    <property type="evidence" value="ECO:0007669"/>
    <property type="project" value="InterPro"/>
</dbReference>
<dbReference type="CDD" id="cd24060">
    <property type="entry name" value="ASKHA_NBD_ROK_GNE"/>
    <property type="match status" value="1"/>
</dbReference>
<dbReference type="CDD" id="cd03786">
    <property type="entry name" value="GTB_UDP-GlcNAc_2-Epimerase"/>
    <property type="match status" value="1"/>
</dbReference>
<dbReference type="FunFam" id="3.30.420.40:FF:000053">
    <property type="entry name" value="Bifunctional UDP-N-acetylglucosamine 2-epimerase/N-acetylmannosamine kinase"/>
    <property type="match status" value="1"/>
</dbReference>
<dbReference type="FunFam" id="3.30.420.40:FF:000060">
    <property type="entry name" value="Bifunctional UDP-N-acetylglucosamine 2-epimerase/N-acetylmannosamine kinase"/>
    <property type="match status" value="1"/>
</dbReference>
<dbReference type="FunFam" id="3.40.50.2000:FF:000013">
    <property type="entry name" value="Bifunctional UDP-N-acetylglucosamine 2-epimerase/N-acetylmannosamine kinase"/>
    <property type="match status" value="1"/>
</dbReference>
<dbReference type="FunFam" id="3.40.50.2000:FF:000015">
    <property type="entry name" value="Bifunctional UDP-N-acetylglucosamine 2-epimerase/N-acetylmannosamine kinase"/>
    <property type="match status" value="1"/>
</dbReference>
<dbReference type="Gene3D" id="3.30.420.40">
    <property type="match status" value="2"/>
</dbReference>
<dbReference type="Gene3D" id="3.40.50.2000">
    <property type="entry name" value="Glycogen Phosphorylase B"/>
    <property type="match status" value="2"/>
</dbReference>
<dbReference type="InterPro" id="IPR043129">
    <property type="entry name" value="ATPase_NBD"/>
</dbReference>
<dbReference type="InterPro" id="IPR000600">
    <property type="entry name" value="ROK"/>
</dbReference>
<dbReference type="InterPro" id="IPR020004">
    <property type="entry name" value="UDP-GlcNAc_Epase"/>
</dbReference>
<dbReference type="InterPro" id="IPR003331">
    <property type="entry name" value="UDP_GlcNAc_Epimerase_2_dom"/>
</dbReference>
<dbReference type="NCBIfam" id="TIGR03568">
    <property type="entry name" value="NeuC_NnaA"/>
    <property type="match status" value="1"/>
</dbReference>
<dbReference type="PANTHER" id="PTHR18964:SF149">
    <property type="entry name" value="BIFUNCTIONAL UDP-N-ACETYLGLUCOSAMINE 2-EPIMERASE_N-ACETYLMANNOSAMINE KINASE"/>
    <property type="match status" value="1"/>
</dbReference>
<dbReference type="PANTHER" id="PTHR18964">
    <property type="entry name" value="ROK (REPRESSOR, ORF, KINASE) FAMILY"/>
    <property type="match status" value="1"/>
</dbReference>
<dbReference type="Pfam" id="PF02350">
    <property type="entry name" value="Epimerase_2"/>
    <property type="match status" value="1"/>
</dbReference>
<dbReference type="Pfam" id="PF00480">
    <property type="entry name" value="ROK"/>
    <property type="match status" value="1"/>
</dbReference>
<dbReference type="PRINTS" id="PR00475">
    <property type="entry name" value="HEXOKINASE"/>
</dbReference>
<dbReference type="SUPFAM" id="SSF53067">
    <property type="entry name" value="Actin-like ATPase domain"/>
    <property type="match status" value="1"/>
</dbReference>
<dbReference type="SUPFAM" id="SSF53756">
    <property type="entry name" value="UDP-Glycosyltransferase/glycogen phosphorylase"/>
    <property type="match status" value="1"/>
</dbReference>
<accession>Q9Y223</accession>
<accession>A6PZH2</accession>
<accession>A6PZH3</accession>
<accession>A7UNU7</accession>
<accession>B2R6E1</accession>
<accession>B7Z372</accession>
<accession>B7Z428</accession>
<accession>D3DRP7</accession>
<accession>F5H499</accession>
<accession>H0YFA7</accession>
<accession>Q0VA94</accession>
<proteinExistence type="evidence at protein level"/>
<feature type="chain" id="PRO_0000095716" description="Bifunctional UDP-N-acetylglucosamine 2-epimerase/N-acetylmannosamine kinase">
    <location>
        <begin position="1"/>
        <end position="722"/>
    </location>
</feature>
<feature type="region of interest" description="UDP-N-acetylglucosamine 2-epimerase" evidence="1">
    <location>
        <begin position="1"/>
        <end status="unknown"/>
    </location>
</feature>
<feature type="region of interest" description="N-acetylmannosamine kinase" evidence="1">
    <location>
        <begin position="406"/>
        <end position="722"/>
    </location>
</feature>
<feature type="active site" evidence="24 41 42">
    <location>
        <position position="517"/>
    </location>
</feature>
<feature type="binding site" evidence="26 45">
    <location>
        <position position="19"/>
    </location>
    <ligand>
        <name>UDP</name>
        <dbReference type="ChEBI" id="CHEBI:58223"/>
    </ligand>
</feature>
<feature type="binding site" evidence="26 45">
    <location>
        <position position="23"/>
    </location>
    <ligand>
        <name>UDP</name>
        <dbReference type="ChEBI" id="CHEBI:58223"/>
    </ligand>
</feature>
<feature type="binding site" evidence="26 45">
    <location>
        <position position="113"/>
    </location>
    <ligand>
        <name>UDP</name>
        <dbReference type="ChEBI" id="CHEBI:58223"/>
    </ligand>
</feature>
<feature type="binding site" evidence="26 45">
    <location>
        <position position="220"/>
    </location>
    <ligand>
        <name>UDP</name>
        <dbReference type="ChEBI" id="CHEBI:58223"/>
    </ligand>
</feature>
<feature type="binding site" evidence="26 45">
    <location>
        <position position="253"/>
    </location>
    <ligand>
        <name>UDP</name>
        <dbReference type="ChEBI" id="CHEBI:58223"/>
    </ligand>
</feature>
<feature type="binding site" evidence="26 45">
    <location>
        <position position="259"/>
    </location>
    <ligand>
        <name>CMP-N-acetyl-beta-neuraminate</name>
        <dbReference type="ChEBI" id="CHEBI:57812"/>
        <note>allosteric inhibitor</note>
    </ligand>
</feature>
<feature type="binding site" evidence="26 45">
    <location>
        <position position="271"/>
    </location>
    <ligand>
        <name>CMP-N-acetyl-beta-neuraminate</name>
        <dbReference type="ChEBI" id="CHEBI:57812"/>
        <note>allosteric inhibitor</note>
    </ligand>
</feature>
<feature type="binding site" evidence="26 45">
    <location>
        <position position="280"/>
    </location>
    <ligand>
        <name>CMP-N-acetyl-beta-neuraminate</name>
        <dbReference type="ChEBI" id="CHEBI:57812"/>
        <note>allosteric inhibitor</note>
    </ligand>
</feature>
<feature type="binding site" evidence="26 45">
    <location>
        <position position="281"/>
    </location>
    <ligand>
        <name>CMP-N-acetyl-beta-neuraminate</name>
        <dbReference type="ChEBI" id="CHEBI:57812"/>
        <note>allosteric inhibitor</note>
    </ligand>
</feature>
<feature type="binding site" evidence="26 45">
    <location>
        <position position="282"/>
    </location>
    <ligand>
        <name>UDP</name>
        <dbReference type="ChEBI" id="CHEBI:58223"/>
    </ligand>
</feature>
<feature type="binding site" evidence="26 45">
    <location>
        <position position="301"/>
    </location>
    <ligand>
        <name>UDP</name>
        <dbReference type="ChEBI" id="CHEBI:58223"/>
    </ligand>
</feature>
<feature type="binding site" evidence="26 45">
    <location>
        <position position="302"/>
    </location>
    <ligand>
        <name>UDP</name>
        <dbReference type="ChEBI" id="CHEBI:58223"/>
    </ligand>
</feature>
<feature type="binding site" evidence="26 45">
    <location>
        <position position="307"/>
    </location>
    <ligand>
        <name>UDP</name>
        <dbReference type="ChEBI" id="CHEBI:58223"/>
    </ligand>
</feature>
<feature type="binding site" evidence="26 45">
    <location>
        <position position="321"/>
    </location>
    <ligand>
        <name>UDP</name>
        <dbReference type="ChEBI" id="CHEBI:58223"/>
    </ligand>
</feature>
<feature type="binding site" evidence="24 42 43">
    <location>
        <position position="413"/>
    </location>
    <ligand>
        <name>Mg(2+)</name>
        <dbReference type="ChEBI" id="CHEBI:18420"/>
    </ligand>
</feature>
<feature type="binding site" evidence="24 43">
    <location>
        <position position="416"/>
    </location>
    <ligand>
        <name>an N-acyl-D-mannosamine 6-phosphate</name>
        <dbReference type="ChEBI" id="CHEBI:57666"/>
    </ligand>
</feature>
<feature type="binding site" evidence="24 42 43">
    <location>
        <position position="417"/>
    </location>
    <ligand>
        <name>ADP</name>
        <dbReference type="ChEBI" id="CHEBI:456216"/>
    </ligand>
</feature>
<feature type="binding site" evidence="24 42 43">
    <location>
        <position position="418"/>
    </location>
    <ligand>
        <name>ADP</name>
        <dbReference type="ChEBI" id="CHEBI:456216"/>
    </ligand>
</feature>
<feature type="binding site" evidence="24 42 43">
    <location>
        <position position="420"/>
    </location>
    <ligand>
        <name>ADP</name>
        <dbReference type="ChEBI" id="CHEBI:456216"/>
    </ligand>
</feature>
<feature type="binding site" evidence="24 41 42 43">
    <location>
        <position position="476"/>
    </location>
    <ligand>
        <name>an N-acyl-D-mannosamine</name>
        <dbReference type="ChEBI" id="CHEBI:16062"/>
    </ligand>
</feature>
<feature type="binding site" evidence="24 43">
    <location>
        <position position="476"/>
    </location>
    <ligand>
        <name>an N-acyl-D-mannosamine 6-phosphate</name>
        <dbReference type="ChEBI" id="CHEBI:57666"/>
    </ligand>
</feature>
<feature type="binding site" evidence="24 41 42 43">
    <location>
        <position position="477"/>
    </location>
    <ligand>
        <name>an N-acyl-D-mannosamine</name>
        <dbReference type="ChEBI" id="CHEBI:16062"/>
    </ligand>
</feature>
<feature type="binding site" evidence="24 43">
    <location>
        <position position="477"/>
    </location>
    <ligand>
        <name>an N-acyl-D-mannosamine 6-phosphate</name>
        <dbReference type="ChEBI" id="CHEBI:57666"/>
    </ligand>
</feature>
<feature type="binding site" evidence="24 41 42 43">
    <location>
        <position position="489"/>
    </location>
    <ligand>
        <name>an N-acyl-D-mannosamine</name>
        <dbReference type="ChEBI" id="CHEBI:16062"/>
    </ligand>
</feature>
<feature type="binding site" evidence="24 43">
    <location>
        <position position="489"/>
    </location>
    <ligand>
        <name>an N-acyl-D-mannosamine 6-phosphate</name>
        <dbReference type="ChEBI" id="CHEBI:57666"/>
    </ligand>
</feature>
<feature type="binding site" evidence="24 41 42 43">
    <location>
        <position position="516"/>
    </location>
    <ligand>
        <name>an N-acyl-D-mannosamine</name>
        <dbReference type="ChEBI" id="CHEBI:16062"/>
    </ligand>
</feature>
<feature type="binding site" evidence="24 43">
    <location>
        <position position="516"/>
    </location>
    <ligand>
        <name>an N-acyl-D-mannosamine 6-phosphate</name>
        <dbReference type="ChEBI" id="CHEBI:57666"/>
    </ligand>
</feature>
<feature type="binding site" evidence="24 41 42">
    <location>
        <position position="517"/>
    </location>
    <ligand>
        <name>an N-acyl-D-mannosamine</name>
        <dbReference type="ChEBI" id="CHEBI:16062"/>
    </ligand>
</feature>
<feature type="binding site" evidence="24 43">
    <location>
        <position position="517"/>
    </location>
    <ligand>
        <name>an N-acyl-D-mannosamine 6-phosphate</name>
        <dbReference type="ChEBI" id="CHEBI:57666"/>
    </ligand>
</feature>
<feature type="binding site" evidence="24 43">
    <location>
        <position position="545"/>
    </location>
    <ligand>
        <name>an N-acyl-D-mannosamine 6-phosphate</name>
        <dbReference type="ChEBI" id="CHEBI:57666"/>
    </ligand>
</feature>
<feature type="binding site" evidence="24 41 42 43">
    <location>
        <position position="566"/>
    </location>
    <ligand>
        <name>an N-acyl-D-mannosamine</name>
        <dbReference type="ChEBI" id="CHEBI:16062"/>
    </ligand>
</feature>
<feature type="binding site" evidence="24 41 42 43">
    <location>
        <position position="569"/>
    </location>
    <ligand>
        <name>an N-acyl-D-mannosamine</name>
        <dbReference type="ChEBI" id="CHEBI:16062"/>
    </ligand>
</feature>
<feature type="binding site" evidence="24 43">
    <location>
        <position position="569"/>
    </location>
    <ligand>
        <name>an N-acyl-D-mannosamine 6-phosphate</name>
        <dbReference type="ChEBI" id="CHEBI:57666"/>
    </ligand>
</feature>
<feature type="binding site" evidence="23 24 41 42 43 44">
    <location>
        <position position="569"/>
    </location>
    <ligand>
        <name>Zn(2+)</name>
        <dbReference type="ChEBI" id="CHEBI:29105"/>
        <note>structural</note>
    </ligand>
</feature>
<feature type="binding site" evidence="23 24 41 42 43 44">
    <location>
        <position position="579"/>
    </location>
    <ligand>
        <name>Zn(2+)</name>
        <dbReference type="ChEBI" id="CHEBI:29105"/>
        <note>structural</note>
    </ligand>
</feature>
<feature type="binding site" evidence="23 24 41 42 43 44">
    <location>
        <position position="581"/>
    </location>
    <ligand>
        <name>Zn(2+)</name>
        <dbReference type="ChEBI" id="CHEBI:29105"/>
        <note>structural</note>
    </ligand>
</feature>
<feature type="binding site" evidence="23 24 41 42 43 44">
    <location>
        <position position="586"/>
    </location>
    <ligand>
        <name>Zn(2+)</name>
        <dbReference type="ChEBI" id="CHEBI:29105"/>
        <note>structural</note>
    </ligand>
</feature>
<feature type="binding site" evidence="24 41 42">
    <location>
        <position position="588"/>
    </location>
    <ligand>
        <name>an N-acyl-D-mannosamine</name>
        <dbReference type="ChEBI" id="CHEBI:16062"/>
    </ligand>
</feature>
<feature type="binding site" evidence="24 43">
    <location>
        <position position="588"/>
    </location>
    <ligand>
        <name>an N-acyl-D-mannosamine 6-phosphate</name>
        <dbReference type="ChEBI" id="CHEBI:57666"/>
    </ligand>
</feature>
<feature type="splice variant" id="VSP_043975" description="In isoform 5." evidence="35">
    <location>
        <begin position="1"/>
        <end position="59"/>
    </location>
</feature>
<feature type="splice variant" id="VSP_041028" description="In isoform 3." evidence="35 36">
    <original>MEKNGNNRKLRVCVATCNRADYSKLAPIMFGIKTEPEFFELDVVVLGSHLIDDYG</original>
    <variation>MPIGDCSVAAKPRKQLLCSLFQTTLGYRARASGWKPMVICRGSHAFKDLI</variation>
    <location>
        <begin position="1"/>
        <end position="55"/>
    </location>
</feature>
<feature type="splice variant" id="VSP_041027" description="In isoform 2." evidence="36">
    <original>M</original>
    <variation>METYGYLQRESCFQGPHELYFKNLSKRNKQIM</variation>
    <location>
        <position position="1"/>
    </location>
</feature>
<feature type="splice variant" id="VSP_043976" description="In isoform 5." evidence="35">
    <location>
        <begin position="206"/>
        <end position="256"/>
    </location>
</feature>
<feature type="splice variant" id="VSP_043474" description="In isoform 4." evidence="37">
    <location>
        <begin position="471"/>
        <end position="544"/>
    </location>
</feature>
<feature type="sequence variant" id="VAR_087335" description="In NM; decreased UDP-N-acetylglucosamine 2-epimerase activity; no effect on N-acylmannosamine kinase activity; dbSNP:rs1209266607." evidence="19">
    <original>C</original>
    <variation>S</variation>
    <location>
        <position position="13"/>
    </location>
</feature>
<feature type="sequence variant" id="VAR_021771" description="In NM; dbSNP:rs1554664064." evidence="20">
    <original>P</original>
    <variation>S</variation>
    <location>
        <position position="27"/>
    </location>
</feature>
<feature type="sequence variant" id="VAR_017945" description="In NM." evidence="16">
    <original>P</original>
    <variation>L</variation>
    <location>
        <position position="36"/>
    </location>
</feature>
<feature type="sequence variant" id="VAR_021772" description="In NM; decreased UDP-N-acetylglucosamine 2-epimerase activity; impaired homohexamers formation." evidence="13 19">
    <original>H</original>
    <variation>Q</variation>
    <location>
        <position position="132"/>
    </location>
</feature>
<feature type="sequence variant" id="VAR_089477" description="In THC12; likely pathogenic." evidence="28">
    <original>H</original>
    <variation>Y</variation>
    <location>
        <position position="157"/>
    </location>
</feature>
<feature type="sequence variant" id="VAR_021773" description="In NM; dbSNP:rs769215411." evidence="17">
    <original>R</original>
    <variation>C</variation>
    <location>
        <position position="162"/>
    </location>
</feature>
<feature type="sequence variant" id="VAR_021774" description="In NM; dbSNP:rs121908634." evidence="15">
    <original>M</original>
    <variation>V</variation>
    <location>
        <position position="171"/>
    </location>
</feature>
<feature type="sequence variant" id="VAR_021775" description="In NM; decreased UDP-N-acetylglucosamine 2-epimerase activity; no effect on N-acylmannosamine kinase activity; impaired homohexamers formation; dbSNP:rs139425890." evidence="13 19">
    <original>D</original>
    <variation>V</variation>
    <location>
        <position position="176"/>
    </location>
</feature>
<feature type="sequence variant" id="VAR_021776" description="In NM; decreased UDP-N-acetylglucosamine 2-epimerase activity; impaired homohexamers formation; dbSNP:rs539332585." evidence="13 19">
    <original>R</original>
    <variation>C</variation>
    <location>
        <position position="177"/>
    </location>
</feature>
<feature type="sequence variant" id="VAR_017946" description="In NM; uncertain significance; dbSNP:rs369328625." evidence="16 21">
    <original>I</original>
    <variation>F</variation>
    <location>
        <position position="200"/>
    </location>
</feature>
<feature type="sequence variant" id="VAR_021777" description="In NM; moderate phenotype with unusual involvement of quadriceps; dbSNP:rs766266918." evidence="20">
    <original>G</original>
    <variation>S</variation>
    <location>
        <position position="206"/>
    </location>
</feature>
<feature type="sequence variant" id="VAR_021778" description="In NM; dbSNP:rs779694939." evidence="14">
    <original>V</original>
    <variation>A</variation>
    <location>
        <position position="216"/>
    </location>
</feature>
<feature type="sequence variant" id="VAR_017947" description="In NM; dbSNP:rs121908630." evidence="8 12 16">
    <original>D</original>
    <variation>N</variation>
    <location>
        <position position="225"/>
    </location>
</feature>
<feature type="sequence variant" id="VAR_017948" description="In NM; dbSNP:rs121908629." evidence="8 12 16 20">
    <original>R</original>
    <variation>Q</variation>
    <location>
        <position position="246"/>
    </location>
</feature>
<feature type="sequence variant" id="VAR_017949" description="In NM; dbSNP:rs773729410." evidence="12">
    <original>R</original>
    <variation>W</variation>
    <location>
        <position position="246"/>
    </location>
</feature>
<feature type="sequence variant" id="VAR_017950" description="In SIALURIA; strong reduction of feedback inhibition by CMP-Neu5Ac; dbSNP:rs121908623." evidence="3">
    <original>R</original>
    <variation>L</variation>
    <location>
        <position position="263"/>
    </location>
</feature>
<feature type="sequence variant" id="VAR_017951" description="In SIALURIA; abolishes feedback inhibition by CMP-Neu5Ac; dbSNP:rs121908622." evidence="3 5 7">
    <original>R</original>
    <variation>Q</variation>
    <location>
        <position position="266"/>
    </location>
</feature>
<feature type="sequence variant" id="VAR_017952" description="In sialuria; dbSNP:rs121908621." evidence="3">
    <original>R</original>
    <variation>W</variation>
    <location>
        <position position="266"/>
    </location>
</feature>
<feature type="sequence variant" id="VAR_017953" description="In NM; requires 2 nucleotide substitutions; dbSNP:rs121908633." evidence="16 21">
    <original>C</original>
    <variation>V</variation>
    <location>
        <position position="303"/>
    </location>
</feature>
<feature type="sequence variant" id="VAR_021779" description="In NM; dbSNP:rs1455785164." evidence="13">
    <original>R</original>
    <variation>Q</variation>
    <location>
        <position position="306"/>
    </location>
</feature>
<feature type="sequence variant" id="VAR_021780" description="In NM; decreased UDP-N-acetylglucosamine 2-epimerase activity; no effect on N-acylmannosamine kinase activity; impaired homohexamers formation." evidence="13 19">
    <original>V</original>
    <variation>A</variation>
    <location>
        <position position="331"/>
    </location>
</feature>
<feature type="sequence variant" id="VAR_017954" description="In NM; decreased UDP-N-acetylglucosamine 2-epimerase activity; impaired homohexamers formation; dbSNP:rs199877522." evidence="13 16 19 21">
    <original>D</original>
    <variation>Y</variation>
    <location>
        <position position="378"/>
    </location>
</feature>
<feature type="sequence variant" id="VAR_089478" description="In THC12; likely pathogenic; dbSNP:rs1280775456." evidence="29">
    <original>D</original>
    <variation>Y</variation>
    <location>
        <position position="413"/>
    </location>
</feature>
<feature type="sequence variant" id="VAR_089479" description="In THC12; likely pathogenic; dbSNP:rs1554659711." evidence="32">
    <original>T</original>
    <variation>M</variation>
    <location>
        <position position="417"/>
    </location>
</feature>
<feature type="sequence variant" id="VAR_089480" description="In THC12; likely pathogenic." evidence="29">
    <location>
        <begin position="420"/>
        <end position="722"/>
    </location>
</feature>
<feature type="sequence variant" id="VAR_089481" description="In THC12; likely pathogenic; dbSNP:rs780092539." evidence="31 32">
    <original>R</original>
    <variation>Q</variation>
    <location>
        <position position="420"/>
    </location>
</feature>
<feature type="sequence variant" id="VAR_017955" description="In NM; dbSNP:rs121908631." evidence="9 12 16">
    <original>A</original>
    <variation>V</variation>
    <location>
        <position position="460"/>
    </location>
</feature>
<feature type="sequence variant" id="VAR_021781" description="In NM; decreased UDP-N-acetylglucosamine 2-epimerase activity; decreased N-acylmannosamine kinase activity corresponding to less than 10% of wild-type activity." evidence="13 18 19">
    <original>I</original>
    <variation>T</variation>
    <location>
        <position position="472"/>
    </location>
</feature>
<feature type="sequence variant" id="VAR_089482" description="In THC12; likely pathogenic; requires 2 nucleotide substitutions." evidence="28">
    <original>G</original>
    <variation>F</variation>
    <location>
        <position position="475"/>
    </location>
</feature>
<feature type="sequence variant" id="VAR_089483" description="In THC12; uncertain significance; reduced protein abundance in homozygous patient cells; requires 2 nucleotide substitutions." evidence="30">
    <original>V</original>
    <variation>R</variation>
    <location>
        <position position="485"/>
    </location>
</feature>
<feature type="sequence variant" id="VAR_089484" description="In THC12; uncertain significance; dbSNP:rs774867424." evidence="28">
    <original>L</original>
    <variation>P</variation>
    <location>
        <position position="486"/>
    </location>
</feature>
<feature type="sequence variant" id="VAR_021782" description="In NM and THC12; likely pathogenic; decreased UDP-N-acetylglucosamine 2-epimerase activity; decreased N-acylmannosamine kinase activity; dbSNP:rs1554658910." evidence="20 21 24 28">
    <original>N</original>
    <variation>S</variation>
    <location>
        <position position="519"/>
    </location>
</feature>
<feature type="sequence variant" id="VAR_017956" description="In NM; decreased UDP-N-acetylglucosamine 2-epimerase activity corresponding to less than 10% of wild-type activity; decreased N-acylmannosamine kinase activity; impaired homohexamers formation; dbSNP:rs764698870." evidence="12 19">
    <original>A</original>
    <variation>V</variation>
    <location>
        <position position="524"/>
    </location>
</feature>
<feature type="sequence variant" id="VAR_017957" description="In NM; decreased N-acylmannosamine kinase activity; dbSNP:rs986773986." evidence="16 21 24">
    <original>F</original>
    <variation>C</variation>
    <location>
        <position position="528"/>
    </location>
</feature>
<feature type="sequence variant" id="VAR_089485" description="In THC12; uncertain significance; reduced protein abundance in homozygous patient cells." evidence="30">
    <original>T</original>
    <variation>R</variation>
    <location>
        <position position="544"/>
    </location>
</feature>
<feature type="sequence variant" id="VAR_017958" description="In NM; dbSNP:rs886043979." evidence="16">
    <original>I</original>
    <variation>T</variation>
    <location>
        <position position="557"/>
    </location>
</feature>
<feature type="sequence variant" id="VAR_089486" description="In THC12; likely pathogenic; results in severely decreased cell surface sialylation." evidence="33">
    <original>C</original>
    <variation>Y</variation>
    <location>
        <position position="563"/>
    </location>
</feature>
<feature type="sequence variant" id="VAR_017959" description="In NM and THC12; likely pathogenic; mildly decreased UDP-N-acetylglucosamine 2-epimerase activity; decreased N-acylmannosamine kinase activity corresponding to less than 10% of wild-type activity; does not affect homohexamers formation; dbSNP:rs121908632." evidence="9 10 11 12 13 16 18 19 25">
    <original>V</original>
    <variation>L</variation>
    <location>
        <position position="572"/>
    </location>
</feature>
<feature type="sequence variant" id="VAR_017960" description="In NM; decreased UDP-N-acetylglucosamine 2-epimerase activity; decreased N-acylmannosamine kinase activity; dbSNP:rs121908625." evidence="8 12 16 21">
    <original>G</original>
    <variation>E</variation>
    <location>
        <position position="576"/>
    </location>
</feature>
<feature type="sequence variant" id="VAR_017961" description="In NM; decreased UDP-N-acetylglucosamine 2-epimerase activity; decreased N-acylmannosamine kinase activity; dbSNP:rs748949603." evidence="16 21 24">
    <original>I</original>
    <variation>T</variation>
    <location>
        <position position="587"/>
    </location>
</feature>
<feature type="sequence variant" id="VAR_021783" description="In NM; dbSNP:rs387906347." evidence="20">
    <original>A</original>
    <variation>T</variation>
    <location>
        <position position="600"/>
    </location>
</feature>
<feature type="sequence variant" id="VAR_021784" description="In NM; decreased N-acylmannosamine kinase activity; does not affect homohexamers formation; dbSNP:rs1382191649." evidence="13 19">
    <original>A</original>
    <variation>T</variation>
    <location>
        <position position="630"/>
    </location>
</feature>
<feature type="sequence variant" id="VAR_017962" description="In NM; dbSNP:rs121908626." evidence="8 12 16 21 24">
    <original>A</original>
    <variation>T</variation>
    <location>
        <position position="631"/>
    </location>
</feature>
<feature type="sequence variant" id="VAR_017963" description="In NM; does not affect homohexamers formation; dbSNP:rs62541771." evidence="10 13 14 16 19 21 24">
    <original>A</original>
    <variation>V</variation>
    <location>
        <position position="631"/>
    </location>
</feature>
<feature type="sequence variant" id="VAR_017964" description="In NM; dbSNP:rs1191857860." evidence="12">
    <original>Y</original>
    <variation>H</variation>
    <location>
        <position position="675"/>
    </location>
</feature>
<feature type="sequence variant" id="VAR_017965" description="In NM; dbSNP:rs121908627." evidence="8 12 16">
    <original>V</original>
    <variation>M</variation>
    <location>
        <position position="696"/>
    </location>
</feature>
<feature type="sequence variant" id="VAR_089487" description="In THC12; likely pathogenic; the orthologous mutation in mouse embryos results in cerebrospinal hemorrhages and defective angiogenesis; results in loss of cell surface sialylation." evidence="33">
    <original>P</original>
    <variation>R</variation>
    <location>
        <position position="704"/>
    </location>
</feature>
<feature type="sequence variant" id="VAR_087336" description="In NM and THC12; likely pathogenic; decreased UDP-N-acetylglucosamine 2-epimerase activity; severely decreased N-acylmannosamine kinase activity; dbSNP:rs1554657922." evidence="19 25">
    <original>G</original>
    <variation>S</variation>
    <location>
        <position position="708"/>
    </location>
</feature>
<feature type="sequence variant" id="VAR_017966" description="In NM; decreased N-acylmannosamine kinase activity; dbSNP:rs28937594." evidence="8 12 15 16 24">
    <original>M</original>
    <variation>T</variation>
    <location>
        <position position="712"/>
    </location>
</feature>
<feature type="mutagenesis site" description="Loss of N-acylmannosamine kinase activity. Decreased affinity for N-acyl-D-mannosamine. No effect on structure." evidence="24">
    <original>D</original>
    <variation>A</variation>
    <variation>N</variation>
    <location>
        <position position="517"/>
    </location>
</feature>
<feature type="sequence conflict" description="In Ref. 6; BAH12108." evidence="38" ref="6">
    <original>D</original>
    <variation>G</variation>
    <location>
        <position position="338"/>
    </location>
</feature>
<feature type="sequence conflict" description="In Ref. 6; BAH12414." evidence="38" ref="6">
    <original>K</original>
    <variation>R</variation>
    <location>
        <position position="359"/>
    </location>
</feature>
<feature type="sequence conflict" description="In Ref. 6; BAH12108." evidence="38" ref="6">
    <original>G</original>
    <variation>V</variation>
    <location>
        <position position="364"/>
    </location>
</feature>
<feature type="sequence conflict" description="In Ref. 6; BAH12108." evidence="38" ref="6">
    <original>P</original>
    <variation>L</variation>
    <location>
        <position position="382"/>
    </location>
</feature>
<feature type="sequence conflict" description="In Ref. 6; BAH12108." evidence="38" ref="6">
    <original>V</original>
    <variation>A</variation>
    <location>
        <position position="498"/>
    </location>
</feature>
<feature type="sequence conflict" description="In Ref. 6; BAH12414." evidence="38" ref="6">
    <original>A</original>
    <variation>V</variation>
    <location>
        <position position="521"/>
    </location>
</feature>
<feature type="strand" evidence="47">
    <location>
        <begin position="10"/>
        <end position="16"/>
    </location>
</feature>
<feature type="helix" evidence="47">
    <location>
        <begin position="19"/>
        <end position="33"/>
    </location>
</feature>
<feature type="turn" evidence="47">
    <location>
        <begin position="36"/>
        <end position="38"/>
    </location>
</feature>
<feature type="strand" evidence="47">
    <location>
        <begin position="39"/>
        <end position="46"/>
    </location>
</feature>
<feature type="helix" evidence="47">
    <location>
        <begin position="47"/>
        <end position="50"/>
    </location>
</feature>
<feature type="helix" evidence="47">
    <location>
        <begin position="52"/>
        <end position="54"/>
    </location>
</feature>
<feature type="helix" evidence="47">
    <location>
        <begin position="58"/>
        <end position="63"/>
    </location>
</feature>
<feature type="strand" evidence="47">
    <location>
        <begin position="68"/>
        <end position="72"/>
    </location>
</feature>
<feature type="strand" evidence="47">
    <location>
        <begin position="77"/>
        <end position="80"/>
    </location>
</feature>
<feature type="helix" evidence="47">
    <location>
        <begin position="81"/>
        <end position="102"/>
    </location>
</feature>
<feature type="strand" evidence="47">
    <location>
        <begin position="105"/>
        <end position="113"/>
    </location>
</feature>
<feature type="helix" evidence="47">
    <location>
        <begin position="114"/>
        <end position="125"/>
    </location>
</feature>
<feature type="strand" evidence="47">
    <location>
        <begin position="129"/>
        <end position="134"/>
    </location>
</feature>
<feature type="helix" evidence="47">
    <location>
        <begin position="142"/>
        <end position="153"/>
    </location>
</feature>
<feature type="strand" evidence="47">
    <location>
        <begin position="155"/>
        <end position="161"/>
    </location>
</feature>
<feature type="helix" evidence="47">
    <location>
        <begin position="162"/>
        <end position="170"/>
    </location>
</feature>
<feature type="helix" evidence="47">
    <location>
        <begin position="175"/>
        <end position="177"/>
    </location>
</feature>
<feature type="strand" evidence="47">
    <location>
        <begin position="178"/>
        <end position="180"/>
    </location>
</feature>
<feature type="helix" evidence="47">
    <location>
        <begin position="185"/>
        <end position="189"/>
    </location>
</feature>
<feature type="helix" evidence="47">
    <location>
        <begin position="197"/>
        <end position="205"/>
    </location>
</feature>
<feature type="strand" evidence="47">
    <location>
        <begin position="215"/>
        <end position="218"/>
    </location>
</feature>
<feature type="helix" evidence="47">
    <location>
        <begin position="223"/>
        <end position="225"/>
    </location>
</feature>
<feature type="helix" evidence="47">
    <location>
        <begin position="226"/>
        <end position="243"/>
    </location>
</feature>
<feature type="strand" evidence="47">
    <location>
        <begin position="247"/>
        <end position="250"/>
    </location>
</feature>
<feature type="helix" evidence="47">
    <location>
        <begin position="258"/>
        <end position="267"/>
    </location>
</feature>
<feature type="helix" evidence="47">
    <location>
        <begin position="270"/>
        <end position="272"/>
    </location>
</feature>
<feature type="strand" evidence="47">
    <location>
        <begin position="276"/>
        <end position="280"/>
    </location>
</feature>
<feature type="helix" evidence="47">
    <location>
        <begin position="284"/>
        <end position="292"/>
    </location>
</feature>
<feature type="strand" evidence="47">
    <location>
        <begin position="295"/>
        <end position="299"/>
    </location>
</feature>
<feature type="helix" evidence="47">
    <location>
        <begin position="302"/>
        <end position="306"/>
    </location>
</feature>
<feature type="helix" evidence="47">
    <location>
        <begin position="308"/>
        <end position="311"/>
    </location>
</feature>
<feature type="strand" evidence="47">
    <location>
        <begin position="315"/>
        <end position="320"/>
    </location>
</feature>
<feature type="turn" evidence="47">
    <location>
        <begin position="321"/>
        <end position="324"/>
    </location>
</feature>
<feature type="strand" evidence="47">
    <location>
        <begin position="331"/>
        <end position="335"/>
    </location>
</feature>
<feature type="helix" evidence="47">
    <location>
        <begin position="340"/>
        <end position="350"/>
    </location>
</feature>
<feature type="helix" evidence="47">
    <location>
        <begin position="366"/>
        <end position="376"/>
    </location>
</feature>
<feature type="strand" evidence="46">
    <location>
        <begin position="406"/>
        <end position="414"/>
    </location>
</feature>
<feature type="strand" evidence="46">
    <location>
        <begin position="416"/>
        <end position="425"/>
    </location>
</feature>
<feature type="strand" evidence="46">
    <location>
        <begin position="430"/>
        <end position="437"/>
    </location>
</feature>
<feature type="helix" evidence="46">
    <location>
        <begin position="442"/>
        <end position="462"/>
    </location>
</feature>
<feature type="strand" evidence="46">
    <location>
        <begin position="465"/>
        <end position="479"/>
    </location>
</feature>
<feature type="turn" evidence="46">
    <location>
        <begin position="480"/>
        <end position="483"/>
    </location>
</feature>
<feature type="strand" evidence="46">
    <location>
        <begin position="484"/>
        <end position="487"/>
    </location>
</feature>
<feature type="strand" evidence="46">
    <location>
        <begin position="492"/>
        <end position="494"/>
    </location>
</feature>
<feature type="strand" evidence="46">
    <location>
        <begin position="496"/>
        <end position="499"/>
    </location>
</feature>
<feature type="helix" evidence="46">
    <location>
        <begin position="501"/>
        <end position="508"/>
    </location>
</feature>
<feature type="strand" evidence="46">
    <location>
        <begin position="512"/>
        <end position="516"/>
    </location>
</feature>
<feature type="helix" evidence="46">
    <location>
        <begin position="517"/>
        <end position="527"/>
    </location>
</feature>
<feature type="turn" evidence="46">
    <location>
        <begin position="530"/>
        <end position="533"/>
    </location>
</feature>
<feature type="strand" evidence="46">
    <location>
        <begin position="537"/>
        <end position="552"/>
    </location>
</feature>
<feature type="helix" evidence="46">
    <location>
        <begin position="567"/>
        <end position="569"/>
    </location>
</feature>
<feature type="strand" evidence="46">
    <location>
        <begin position="584"/>
        <end position="586"/>
    </location>
</feature>
<feature type="helix" evidence="46">
    <location>
        <begin position="587"/>
        <end position="591"/>
    </location>
</feature>
<feature type="helix" evidence="46">
    <location>
        <begin position="593"/>
        <end position="605"/>
    </location>
</feature>
<feature type="helix" evidence="46">
    <location>
        <begin position="624"/>
        <end position="632"/>
    </location>
</feature>
<feature type="helix" evidence="46">
    <location>
        <begin position="636"/>
        <end position="659"/>
    </location>
</feature>
<feature type="strand" evidence="46">
    <location>
        <begin position="663"/>
        <end position="669"/>
    </location>
</feature>
<feature type="helix" evidence="46">
    <location>
        <begin position="672"/>
        <end position="686"/>
    </location>
</feature>
<feature type="helix" evidence="46">
    <location>
        <begin position="689"/>
        <end position="691"/>
    </location>
</feature>
<feature type="strand" evidence="46">
    <location>
        <begin position="695"/>
        <end position="698"/>
    </location>
</feature>
<feature type="helix" evidence="46">
    <location>
        <begin position="704"/>
        <end position="716"/>
    </location>
</feature>
<name>GLCNE_HUMAN</name>
<protein>
    <recommendedName>
        <fullName evidence="39">Bifunctional UDP-N-acetylglucosamine 2-epimerase/N-acetylmannosamine kinase</fullName>
    </recommendedName>
    <alternativeName>
        <fullName>UDP-GlcNAc-2-epimerase/ManAc kinase</fullName>
    </alternativeName>
    <domain>
        <recommendedName>
            <fullName evidence="39">UDP-N-acetylglucosamine 2-epimerase (hydrolyzing)</fullName>
            <ecNumber evidence="7 19 21 26 27">3.2.1.183</ecNumber>
        </recommendedName>
        <alternativeName>
            <fullName>UDP-GlcNAc-2-epimerase</fullName>
        </alternativeName>
        <alternativeName>
            <fullName>Uridine diphosphate-N-acetylglucosamine-2-epimerase</fullName>
        </alternativeName>
    </domain>
    <domain>
        <recommendedName>
            <fullName evidence="39">N-acetylmannosamine kinase</fullName>
            <ecNumber evidence="19 21">2.7.1.60</ecNumber>
        </recommendedName>
        <alternativeName>
            <fullName>ManAc kinase</fullName>
        </alternativeName>
    </domain>
</protein>
<sequence>MEKNGNNRKLRVCVATCNRADYSKLAPIMFGIKTEPEFFELDVVVLGSHLIDDYGNTYRMIEQDDFDINTRLHTIVRGEDEAAMVESVGLALVKLPDVLNRLKPDIMIVHGDRFDALALATSAALMNIRILHIEGGEVSGTIDDSIRHAITKLAHYHVCCTRSAEQHLISMCEDHDRILLAGCPSYDKLLSAKNKDYMSIIRMWLGDDVKSKDYIVALQHPVTTDIKHSIKMFELTLDALISFNKRTLVLFPNIDAGSKEMVRVMRKKGIEHHPNFRAVKHVPFDQFIQLVAHAGCMIGNSSCGVREVGAFGTPVINLGTRQIGRETGENVLHVRDADTQDKILQALHLQFGKQYPCSKIYGDGNAVPRILKFLKSIDLQEPLQKKFCFPPVKENISQDIDHILETLSALAVDLGGTNLRVAIVSMKGEIVKKYTQFNPKTYEERINLILQMCVEAAAEAVKLNCRILGVGISTGGRVNPREGIVLHSTKLIQEWNSVDLRTPLSDTLHLPVWVDNDGNCAALAERKFGQGKGLENFVTLITGTGIGGGIIHQHELIHGSSFCAAELGHLVVSLDGPDCSCGSHGCIEAYASGMALQREAKKLHDEDLLLVEGMSVPKDEAVGALHLIQAAKLGNAKAQSILRTAGTALGLGVVNILHTMNPSLVILSGVLASHYIHIVKDVIRQQALSSVQDVDVVVSDLVDPALLGAASMVLDYTTRRIY</sequence>
<gene>
    <name evidence="40" type="primary">GNE</name>
    <name evidence="34" type="synonym">GLCNE</name>
    <name evidence="40" type="synonym">IBM2</name>
</gene>
<comment type="function">
    <text evidence="4 7 19 21 27 33">Bifunctional enzyme that possesses both UDP-N-acetylglucosamine 2-epimerase and N-acetylmannosamine kinase activities, and serves as the initiator of the biosynthetic pathway leading to the production of N-acetylneuraminic acid (NeuAc), a critical precursor in the synthesis of sialic acids. By catalyzing this pivotal and rate-limiting step in sialic acid biosynthesis, this enzyme assumes a pivotal role in governing the regulation of cell surface sialylation, playing a role in embryonic angiogenesis (PubMed:10334995, PubMed:11326336, PubMed:14707127, PubMed:16503651, PubMed:2808337, PubMed:38237079). Sialic acids represent a category of negatively charged sugars that reside on the surface of cells as terminal components of glycoconjugates and mediate important functions in various cellular processes, including cell adhesion, signal transduction, and cellular recognition (PubMed:10334995, PubMed:14707127).</text>
</comment>
<comment type="catalytic activity">
    <reaction evidence="7 19 21 26 27">
        <text>UDP-N-acetyl-alpha-D-glucosamine + H2O = aldehydo-N-acetyl-D-mannosamine + UDP + H(+)</text>
        <dbReference type="Rhea" id="RHEA:30683"/>
        <dbReference type="ChEBI" id="CHEBI:15377"/>
        <dbReference type="ChEBI" id="CHEBI:15378"/>
        <dbReference type="ChEBI" id="CHEBI:17122"/>
        <dbReference type="ChEBI" id="CHEBI:57705"/>
        <dbReference type="ChEBI" id="CHEBI:58223"/>
        <dbReference type="EC" id="3.2.1.183"/>
    </reaction>
    <physiologicalReaction direction="left-to-right" evidence="19">
        <dbReference type="Rhea" id="RHEA:30684"/>
    </physiologicalReaction>
</comment>
<comment type="catalytic activity">
    <reaction evidence="19 21">
        <text>an N-acyl-D-mannosamine + ATP = an N-acyl-D-mannosamine 6-phosphate + ADP + H(+)</text>
        <dbReference type="Rhea" id="RHEA:23832"/>
        <dbReference type="ChEBI" id="CHEBI:15378"/>
        <dbReference type="ChEBI" id="CHEBI:16062"/>
        <dbReference type="ChEBI" id="CHEBI:30616"/>
        <dbReference type="ChEBI" id="CHEBI:57666"/>
        <dbReference type="ChEBI" id="CHEBI:456216"/>
        <dbReference type="EC" id="2.7.1.60"/>
    </reaction>
    <physiologicalReaction direction="left-to-right" evidence="19">
        <dbReference type="Rhea" id="RHEA:23833"/>
    </physiologicalReaction>
</comment>
<comment type="activity regulation">
    <text evidence="1 2 26 27">The UDP-N-acetylglucosamine 2-epimerase activity, in contrast to the N-acetylmannosamine kinase activity, exhibits allosteric regulation by cytidine monophosphate-N-acetylneuraminic acid (CMP-Neu5Ac), the end product of neuraminic acid biosynthesis (PubMed:26980148, PubMed:2808337). Moreover, the activity is contingent upon the oligomeric state of the enzyme. The monomeric form is inactive, while the dimeric form selectively catalyzes the phosphorylation of N-acetylmannosamine. The hexameric form, on the other hand, demonstrates full proficiency in both enzyme activities (By similarity). Furthermore, the UDP-N-acetylglucosamine 2-epimerase activity is increased by PKC-mediated phosphorylation (By similarity).</text>
</comment>
<comment type="pathway">
    <text evidence="19 21">Amino-sugar metabolism; N-acetylneuraminate biosynthesis.</text>
</comment>
<comment type="subunit">
    <text evidence="1 23 24 26">Homodimer (PubMed:19841673, PubMed:22343627). Homotetramer (PubMed:26980148). Homohexamer (PubMed:19841673). The hexameric form exhibits both enzyme activities, whereas the dimeric form only catalyzes the phosphorylation of N-acyl-D-mannosamine (By similarity).</text>
</comment>
<comment type="interaction">
    <interactant intactId="EBI-4291090">
        <id>Q9Y223</id>
    </interactant>
    <interactant intactId="EBI-351710">
        <id>P12814</id>
        <label>ACTN1</label>
    </interactant>
    <organismsDiffer>false</organismsDiffer>
    <experiments>3</experiments>
</comment>
<comment type="interaction">
    <interactant intactId="EBI-4291090">
        <id>Q9Y223</id>
    </interactant>
    <interactant intactId="EBI-10173507">
        <id>Q6UY14-3</id>
        <label>ADAMTSL4</label>
    </interactant>
    <organismsDiffer>false</organismsDiffer>
    <experiments>3</experiments>
</comment>
<comment type="interaction">
    <interactant intactId="EBI-4291090">
        <id>Q9Y223</id>
    </interactant>
    <interactant intactId="EBI-740290">
        <id>Q969Y2</id>
        <label>GTPBP3</label>
    </interactant>
    <organismsDiffer>false</organismsDiffer>
    <experiments>3</experiments>
</comment>
<comment type="interaction">
    <interactant intactId="EBI-4291090">
        <id>Q9Y223</id>
    </interactant>
    <interactant intactId="EBI-948001">
        <id>Q15323</id>
        <label>KRT31</label>
    </interactant>
    <organismsDiffer>false</organismsDiffer>
    <experiments>3</experiments>
</comment>
<comment type="interaction">
    <interactant intactId="EBI-4291090">
        <id>Q9Y223</id>
    </interactant>
    <interactant intactId="EBI-10172150">
        <id>P60370</id>
        <label>KRTAP10-5</label>
    </interactant>
    <organismsDiffer>false</organismsDiffer>
    <experiments>3</experiments>
</comment>
<comment type="interaction">
    <interactant intactId="EBI-4291090">
        <id>Q9Y223</id>
    </interactant>
    <interactant intactId="EBI-10172290">
        <id>P60409</id>
        <label>KRTAP10-7</label>
    </interactant>
    <organismsDiffer>false</organismsDiffer>
    <experiments>3</experiments>
</comment>
<comment type="interaction">
    <interactant intactId="EBI-4291090">
        <id>Q9Y223</id>
    </interactant>
    <interactant intactId="EBI-10171774">
        <id>P60410</id>
        <label>KRTAP10-8</label>
    </interactant>
    <organismsDiffer>false</organismsDiffer>
    <experiments>3</experiments>
</comment>
<comment type="interaction">
    <interactant intactId="EBI-4291090">
        <id>Q9Y223</id>
    </interactant>
    <interactant intactId="EBI-10172052">
        <id>P60411</id>
        <label>KRTAP10-9</label>
    </interactant>
    <organismsDiffer>false</organismsDiffer>
    <experiments>3</experiments>
</comment>
<comment type="interaction">
    <interactant intactId="EBI-4291090">
        <id>Q9Y223</id>
    </interactant>
    <interactant intactId="EBI-739863">
        <id>Q9BQ66</id>
        <label>KRTAP4-12</label>
    </interactant>
    <organismsDiffer>false</organismsDiffer>
    <experiments>3</experiments>
</comment>
<comment type="interaction">
    <interactant intactId="EBI-4291090">
        <id>Q9Y223</id>
    </interactant>
    <interactant intactId="EBI-3958099">
        <id>P26371</id>
        <label>KRTAP5-9</label>
    </interactant>
    <organismsDiffer>false</organismsDiffer>
    <experiments>3</experiments>
</comment>
<comment type="interaction">
    <interactant intactId="EBI-4291090">
        <id>Q9Y223</id>
    </interactant>
    <interactant intactId="EBI-1044640">
        <id>Q9BYQ4</id>
        <label>KRTAP9-2</label>
    </interactant>
    <organismsDiffer>false</organismsDiffer>
    <experiments>3</experiments>
</comment>
<comment type="interaction">
    <interactant intactId="EBI-4291090">
        <id>Q9Y223</id>
    </interactant>
    <interactant intactId="EBI-945833">
        <id>Q7Z3S9</id>
        <label>NOTCH2NLA</label>
    </interactant>
    <organismsDiffer>false</organismsDiffer>
    <experiments>4</experiments>
</comment>
<comment type="interaction">
    <interactant intactId="EBI-4291090">
        <id>Q9Y223</id>
    </interactant>
    <interactant intactId="EBI-742487">
        <id>O43597</id>
        <label>SPRY2</label>
    </interactant>
    <organismsDiffer>false</organismsDiffer>
    <experiments>3</experiments>
</comment>
<comment type="interaction">
    <interactant intactId="EBI-11975289">
        <id>Q9Y223-2</id>
    </interactant>
    <interactant intactId="EBI-10173507">
        <id>Q6UY14-3</id>
        <label>ADAMTSL4</label>
    </interactant>
    <organismsDiffer>false</organismsDiffer>
    <experiments>3</experiments>
</comment>
<comment type="interaction">
    <interactant intactId="EBI-11975289">
        <id>Q9Y223-2</id>
    </interactant>
    <interactant intactId="EBI-7317823">
        <id>Q6P5X5</id>
        <label>C22orf39</label>
    </interactant>
    <organismsDiffer>false</organismsDiffer>
    <experiments>3</experiments>
</comment>
<comment type="interaction">
    <interactant intactId="EBI-11975289">
        <id>Q9Y223-2</id>
    </interactant>
    <interactant intactId="EBI-9038570">
        <id>P27918</id>
        <label>CFP</label>
    </interactant>
    <organismsDiffer>false</organismsDiffer>
    <experiments>3</experiments>
</comment>
<comment type="interaction">
    <interactant intactId="EBI-11975289">
        <id>Q9Y223-2</id>
    </interactant>
    <interactant intactId="EBI-3867333">
        <id>A8MQ03</id>
        <label>CYSRT1</label>
    </interactant>
    <organismsDiffer>false</organismsDiffer>
    <experiments>3</experiments>
</comment>
<comment type="interaction">
    <interactant intactId="EBI-11975289">
        <id>Q9Y223-2</id>
    </interactant>
    <interactant intactId="EBI-947964">
        <id>Q16610</id>
        <label>ECM1</label>
    </interactant>
    <organismsDiffer>false</organismsDiffer>
    <experiments>3</experiments>
</comment>
<comment type="interaction">
    <interactant intactId="EBI-11975289">
        <id>Q9Y223-2</id>
    </interactant>
    <interactant intactId="EBI-949532">
        <id>Q9UHF1</id>
        <label>EGFL7</label>
    </interactant>
    <organismsDiffer>false</organismsDiffer>
    <experiments>3</experiments>
</comment>
<comment type="interaction">
    <interactant intactId="EBI-11975289">
        <id>Q9Y223-2</id>
    </interactant>
    <interactant intactId="EBI-747754">
        <id>P28799</id>
        <label>GRN</label>
    </interactant>
    <organismsDiffer>false</organismsDiffer>
    <experiments>6</experiments>
</comment>
<comment type="interaction">
    <interactant intactId="EBI-11975289">
        <id>Q9Y223-2</id>
    </interactant>
    <interactant intactId="EBI-740785">
        <id>P49639</id>
        <label>HOXA1</label>
    </interactant>
    <organismsDiffer>false</organismsDiffer>
    <experiments>5</experiments>
</comment>
<comment type="interaction">
    <interactant intactId="EBI-11975289">
        <id>Q9Y223-2</id>
    </interactant>
    <interactant intactId="EBI-10981970">
        <id>Q5T749</id>
        <label>KPRP</label>
    </interactant>
    <organismsDiffer>false</organismsDiffer>
    <experiments>3</experiments>
</comment>
<comment type="interaction">
    <interactant intactId="EBI-11975289">
        <id>Q9Y223-2</id>
    </interactant>
    <interactant intactId="EBI-948001">
        <id>Q15323</id>
        <label>KRT31</label>
    </interactant>
    <organismsDiffer>false</organismsDiffer>
    <experiments>3</experiments>
</comment>
<comment type="interaction">
    <interactant intactId="EBI-11975289">
        <id>Q9Y223-2</id>
    </interactant>
    <interactant intactId="EBI-1047093">
        <id>O76011</id>
        <label>KRT34</label>
    </interactant>
    <organismsDiffer>false</organismsDiffer>
    <experiments>3</experiments>
</comment>
<comment type="interaction">
    <interactant intactId="EBI-11975289">
        <id>Q9Y223-2</id>
    </interactant>
    <interactant intactId="EBI-10171697">
        <id>Q6A162</id>
        <label>KRT40</label>
    </interactant>
    <organismsDiffer>false</organismsDiffer>
    <experiments>3</experiments>
</comment>
<comment type="interaction">
    <interactant intactId="EBI-11975289">
        <id>Q9Y223-2</id>
    </interactant>
    <interactant intactId="EBI-10221390">
        <id>P78385</id>
        <label>KRT83</label>
    </interactant>
    <organismsDiffer>false</organismsDiffer>
    <experiments>3</experiments>
</comment>
<comment type="interaction">
    <interactant intactId="EBI-11975289">
        <id>Q9Y223-2</id>
    </interactant>
    <interactant intactId="EBI-1049371">
        <id>P78386</id>
        <label>KRT85</label>
    </interactant>
    <organismsDiffer>false</organismsDiffer>
    <experiments>3</experiments>
</comment>
<comment type="interaction">
    <interactant intactId="EBI-11975289">
        <id>Q9Y223-2</id>
    </interactant>
    <interactant intactId="EBI-9996498">
        <id>O43790</id>
        <label>KRT86</label>
    </interactant>
    <organismsDiffer>false</organismsDiffer>
    <experiments>3</experiments>
</comment>
<comment type="interaction">
    <interactant intactId="EBI-11975289">
        <id>Q9Y223-2</id>
    </interactant>
    <interactant intactId="EBI-11959885">
        <id>Q07627</id>
        <label>KRTAP1-1</label>
    </interactant>
    <organismsDiffer>false</organismsDiffer>
    <experiments>3</experiments>
</comment>
<comment type="interaction">
    <interactant intactId="EBI-11975289">
        <id>Q9Y223-2</id>
    </interactant>
    <interactant intactId="EBI-11749135">
        <id>Q8IUG1</id>
        <label>KRTAP1-3</label>
    </interactant>
    <organismsDiffer>false</organismsDiffer>
    <experiments>3</experiments>
</comment>
<comment type="interaction">
    <interactant intactId="EBI-11975289">
        <id>Q9Y223-2</id>
    </interactant>
    <interactant intactId="EBI-10172290">
        <id>P60409</id>
        <label>KRTAP10-7</label>
    </interactant>
    <organismsDiffer>false</organismsDiffer>
    <experiments>3</experiments>
</comment>
<comment type="interaction">
    <interactant intactId="EBI-11975289">
        <id>Q9Y223-2</id>
    </interactant>
    <interactant intactId="EBI-10171774">
        <id>P60410</id>
        <label>KRTAP10-8</label>
    </interactant>
    <organismsDiffer>false</organismsDiffer>
    <experiments>5</experiments>
</comment>
<comment type="interaction">
    <interactant intactId="EBI-11975289">
        <id>Q9Y223-2</id>
    </interactant>
    <interactant intactId="EBI-1052037">
        <id>Q8IUC1</id>
        <label>KRTAP11-1</label>
    </interactant>
    <organismsDiffer>false</organismsDiffer>
    <experiments>3</experiments>
</comment>
<comment type="interaction">
    <interactant intactId="EBI-11975289">
        <id>Q9Y223-2</id>
    </interactant>
    <interactant intactId="EBI-11953334">
        <id>P60328</id>
        <label>KRTAP12-3</label>
    </interactant>
    <organismsDiffer>false</organismsDiffer>
    <experiments>3</experiments>
</comment>
<comment type="interaction">
    <interactant intactId="EBI-11975289">
        <id>Q9Y223-2</id>
    </interactant>
    <interactant intactId="EBI-11953846">
        <id>Q52LG2</id>
        <label>KRTAP13-2</label>
    </interactant>
    <organismsDiffer>false</organismsDiffer>
    <experiments>3</experiments>
</comment>
<comment type="interaction">
    <interactant intactId="EBI-11975289">
        <id>Q9Y223-2</id>
    </interactant>
    <interactant intactId="EBI-10241252">
        <id>Q3SY46</id>
        <label>KRTAP13-3</label>
    </interactant>
    <organismsDiffer>false</organismsDiffer>
    <experiments>3</experiments>
</comment>
<comment type="interaction">
    <interactant intactId="EBI-11975289">
        <id>Q9Y223-2</id>
    </interactant>
    <interactant intactId="EBI-11988175">
        <id>Q9BYP8</id>
        <label>KRTAP17-1</label>
    </interactant>
    <organismsDiffer>false</organismsDiffer>
    <experiments>3</experiments>
</comment>
<comment type="interaction">
    <interactant intactId="EBI-11975289">
        <id>Q9Y223-2</id>
    </interactant>
    <interactant intactId="EBI-12196745">
        <id>Q3LHN2</id>
        <label>KRTAP19-2</label>
    </interactant>
    <organismsDiffer>false</organismsDiffer>
    <experiments>5</experiments>
</comment>
<comment type="interaction">
    <interactant intactId="EBI-11975289">
        <id>Q9Y223-2</id>
    </interactant>
    <interactant intactId="EBI-10241353">
        <id>Q3SYF9</id>
        <label>KRTAP19-7</label>
    </interactant>
    <organismsDiffer>false</organismsDiffer>
    <experiments>3</experiments>
</comment>
<comment type="interaction">
    <interactant intactId="EBI-11975289">
        <id>Q9Y223-2</id>
    </interactant>
    <interactant intactId="EBI-9996449">
        <id>Q9BYR8</id>
        <label>KRTAP3-1</label>
    </interactant>
    <organismsDiffer>false</organismsDiffer>
    <experiments>3</experiments>
</comment>
<comment type="interaction">
    <interactant intactId="EBI-11975289">
        <id>Q9Y223-2</id>
    </interactant>
    <interactant intactId="EBI-3957694">
        <id>Q9BYR6</id>
        <label>KRTAP3-3</label>
    </interactant>
    <organismsDiffer>false</organismsDiffer>
    <experiments>3</experiments>
</comment>
<comment type="interaction">
    <interactant intactId="EBI-11975289">
        <id>Q9Y223-2</id>
    </interactant>
    <interactant intactId="EBI-34579671">
        <id>Q9BYQ7</id>
        <label>KRTAP4-1</label>
    </interactant>
    <organismsDiffer>false</organismsDiffer>
    <experiments>3</experiments>
</comment>
<comment type="interaction">
    <interactant intactId="EBI-11975289">
        <id>Q9Y223-2</id>
    </interactant>
    <interactant intactId="EBI-10302392">
        <id>Q9BYQ6</id>
        <label>KRTAP4-11</label>
    </interactant>
    <organismsDiffer>false</organismsDiffer>
    <experiments>3</experiments>
</comment>
<comment type="interaction">
    <interactant intactId="EBI-11975289">
        <id>Q9Y223-2</id>
    </interactant>
    <interactant intactId="EBI-11958132">
        <id>Q9BYR3</id>
        <label>KRTAP4-4</label>
    </interactant>
    <organismsDiffer>false</organismsDiffer>
    <experiments>3</experiments>
</comment>
<comment type="interaction">
    <interactant intactId="EBI-11975289">
        <id>Q9Y223-2</id>
    </interactant>
    <interactant intactId="EBI-3958099">
        <id>P26371</id>
        <label>KRTAP5-9</label>
    </interactant>
    <organismsDiffer>false</organismsDiffer>
    <experiments>3</experiments>
</comment>
<comment type="interaction">
    <interactant intactId="EBI-11975289">
        <id>Q9Y223-2</id>
    </interactant>
    <interactant intactId="EBI-12111050">
        <id>Q3LI64</id>
        <label>KRTAP6-1</label>
    </interactant>
    <organismsDiffer>false</organismsDiffer>
    <experiments>3</experiments>
</comment>
<comment type="interaction">
    <interactant intactId="EBI-11975289">
        <id>Q9Y223-2</id>
    </interactant>
    <interactant intactId="EBI-11962084">
        <id>Q3LI66</id>
        <label>KRTAP6-2</label>
    </interactant>
    <organismsDiffer>false</organismsDiffer>
    <experiments>3</experiments>
</comment>
<comment type="interaction">
    <interactant intactId="EBI-11975289">
        <id>Q9Y223-2</id>
    </interactant>
    <interactant intactId="EBI-22311199">
        <id>Q3LI67</id>
        <label>KRTAP6-3</label>
    </interactant>
    <organismsDiffer>false</organismsDiffer>
    <experiments>3</experiments>
</comment>
<comment type="interaction">
    <interactant intactId="EBI-11975289">
        <id>Q9Y223-2</id>
    </interactant>
    <interactant intactId="EBI-1044640">
        <id>Q9BYQ4</id>
        <label>KRTAP9-2</label>
    </interactant>
    <organismsDiffer>false</organismsDiffer>
    <experiments>3</experiments>
</comment>
<comment type="interaction">
    <interactant intactId="EBI-11975289">
        <id>Q9Y223-2</id>
    </interactant>
    <interactant intactId="EBI-1043191">
        <id>Q9BYQ3</id>
        <label>KRTAP9-3</label>
    </interactant>
    <organismsDiffer>false</organismsDiffer>
    <experiments>3</experiments>
</comment>
<comment type="interaction">
    <interactant intactId="EBI-11975289">
        <id>Q9Y223-2</id>
    </interactant>
    <interactant intactId="EBI-11958364">
        <id>Q9BYQ0</id>
        <label>KRTAP9-8</label>
    </interactant>
    <organismsDiffer>false</organismsDiffer>
    <experiments>3</experiments>
</comment>
<comment type="interaction">
    <interactant intactId="EBI-11975289">
        <id>Q9Y223-2</id>
    </interactant>
    <interactant intactId="EBI-724076">
        <id>Q99750</id>
        <label>MDFI</label>
    </interactant>
    <organismsDiffer>false</organismsDiffer>
    <experiments>3</experiments>
</comment>
<comment type="interaction">
    <interactant intactId="EBI-11975289">
        <id>Q9Y223-2</id>
    </interactant>
    <interactant intactId="EBI-10261509">
        <id>Q8IV28</id>
        <label>NID2</label>
    </interactant>
    <organismsDiffer>false</organismsDiffer>
    <experiments>3</experiments>
</comment>
<comment type="interaction">
    <interactant intactId="EBI-11975289">
        <id>Q9Y223-2</id>
    </interactant>
    <interactant intactId="EBI-22310682">
        <id>P0DPK4</id>
        <label>NOTCH2NLC</label>
    </interactant>
    <organismsDiffer>false</organismsDiffer>
    <experiments>3</experiments>
</comment>
<comment type="interaction">
    <interactant intactId="EBI-11975289">
        <id>Q9Y223-2</id>
    </interactant>
    <interactant intactId="EBI-726466">
        <id>O15496</id>
        <label>PLA2G10</label>
    </interactant>
    <organismsDiffer>false</organismsDiffer>
    <experiments>3</experiments>
</comment>
<comment type="interaction">
    <interactant intactId="EBI-11975289">
        <id>Q9Y223-2</id>
    </interactant>
    <interactant intactId="EBI-3866665">
        <id>O43609</id>
        <label>SPRY1</label>
    </interactant>
    <organismsDiffer>false</organismsDiffer>
    <experiments>3</experiments>
</comment>
<comment type="interaction">
    <interactant intactId="EBI-11975289">
        <id>Q9Y223-2</id>
    </interactant>
    <interactant intactId="EBI-12290641">
        <id>O43610</id>
        <label>SPRY3</label>
    </interactant>
    <organismsDiffer>false</organismsDiffer>
    <experiments>3</experiments>
</comment>
<comment type="interaction">
    <interactant intactId="EBI-11975289">
        <id>Q9Y223-2</id>
    </interactant>
    <interactant intactId="EBI-719493">
        <id>P14373</id>
        <label>TRIM27</label>
    </interactant>
    <organismsDiffer>false</organismsDiffer>
    <experiments>3</experiments>
</comment>
<comment type="interaction">
    <interactant intactId="EBI-11975289">
        <id>Q9Y223-2</id>
    </interactant>
    <interactant intactId="EBI-5235829">
        <id>Q8IWZ5</id>
        <label>TRIM42</label>
    </interactant>
    <organismsDiffer>false</organismsDiffer>
    <experiments>3</experiments>
</comment>
<comment type="interaction">
    <interactant intactId="EBI-11975289">
        <id>Q9Y223-2</id>
    </interactant>
    <interactant intactId="EBI-742327">
        <id>Q15654</id>
        <label>TRIP6</label>
    </interactant>
    <organismsDiffer>false</organismsDiffer>
    <experiments>3</experiments>
</comment>
<comment type="interaction">
    <interactant intactId="EBI-11975289">
        <id>Q9Y223-2</id>
    </interactant>
    <interactant intactId="EBI-8652667">
        <id>O14817</id>
        <label>TSPAN4</label>
    </interactant>
    <organismsDiffer>false</organismsDiffer>
    <experiments>3</experiments>
</comment>
<comment type="interaction">
    <interactant intactId="EBI-11975289">
        <id>Q9Y223-2</id>
    </interactant>
    <interactant intactId="EBI-11957238">
        <id>Q2TAL6</id>
        <label>VWC2</label>
    </interactant>
    <organismsDiffer>false</organismsDiffer>
    <experiments>3</experiments>
</comment>
<comment type="interaction">
    <interactant intactId="EBI-11975289">
        <id>Q9Y223-2</id>
    </interactant>
    <interactant intactId="EBI-7705033">
        <id>Q9BRX9</id>
        <label>WDR83</label>
    </interactant>
    <organismsDiffer>false</organismsDiffer>
    <experiments>3</experiments>
</comment>
<comment type="interaction">
    <interactant intactId="EBI-11975289">
        <id>Q9Y223-2</id>
    </interactant>
    <interactant intactId="EBI-720609">
        <id>O76024</id>
        <label>WFS1</label>
    </interactant>
    <organismsDiffer>false</organismsDiffer>
    <experiments>3</experiments>
</comment>
<comment type="interaction">
    <interactant intactId="EBI-11975289">
        <id>Q9Y223-2</id>
    </interactant>
    <interactant intactId="EBI-12040603">
        <id>Q9NZC7-5</id>
        <label>WWOX</label>
    </interactant>
    <organismsDiffer>false</organismsDiffer>
    <experiments>3</experiments>
</comment>
<comment type="subcellular location">
    <subcellularLocation>
        <location evidence="1">Cytoplasm</location>
        <location evidence="1">Cytosol</location>
    </subcellularLocation>
</comment>
<comment type="alternative products">
    <event type="alternative splicing"/>
    <isoform>
        <id>Q9Y223-1</id>
        <name>1</name>
        <name>GNE1</name>
        <sequence type="displayed"/>
    </isoform>
    <isoform>
        <id>Q9Y223-2</id>
        <name>2</name>
        <name>GNE2</name>
        <sequence type="described" ref="VSP_041027"/>
    </isoform>
    <isoform>
        <id>Q9Y223-3</id>
        <name>3</name>
        <name>GNE3</name>
        <sequence type="described" ref="VSP_041028"/>
    </isoform>
    <isoform>
        <id>Q9Y223-4</id>
        <name>4</name>
        <sequence type="described" ref="VSP_043474"/>
    </isoform>
    <isoform>
        <id>Q9Y223-5</id>
        <name>5</name>
        <sequence type="described" ref="VSP_043975 VSP_043976"/>
    </isoform>
</comment>
<comment type="tissue specificity">
    <text evidence="3 6 22">Highest expression in liver and placenta. Also found in heart, brain, lung, kidney, skeletal muscle and pancreas. Isoform 1 is expressed in heart, brain, kidney, liver, placenta, lung, spleen, pancreas, skeletal muscle and colon. Isoform 2 is expressed mainly in placenta, but also in brain, kidney, liver, lung, pancreas and colon. Isoform 3 is expressed at low level in kidney, liver, placenta and colon.</text>
</comment>
<comment type="PTM">
    <text evidence="2">Phosphorylated. Phosphorylation by PKC activates the UDP-N-acetylglucosamine 2-epimerase activity.</text>
</comment>
<comment type="disease" evidence="3 5 7 27">
    <disease id="DI-02305">
        <name>Sialuria</name>
        <acronym>SIALURIA</acronym>
        <description>In sialuria, free sialic acid accumulates in the cytoplasm and gram quantities of neuraminic acid are secreted in the urine. The metabolic defect involves lack of feedback inhibition of UDP-GlcNAc 2-epimerase by CMP-Neu5Ac, resulting in constitutive overproduction of free Neu5Ac. Clinical features include variable degrees of developmental delay, coarse facial features and hepatomegaly. Sialuria inheritance is autosomal dominant.</description>
        <dbReference type="MIM" id="269921"/>
    </disease>
    <text>The disease is caused by variants affecting the gene represented in this entry.</text>
</comment>
<comment type="disease" evidence="8 9 10 11 12 13 14 15 16 17 18 19 20 21">
    <disease id="DI-02070">
        <name>Nonaka myopathy</name>
        <acronym>NM</acronym>
        <description>An autosomal recessive myopathy characterized by early adult onset and progressive distal muscle weakness that preferentially affects the anterior tibial muscles, usually sparing the quadriceps femoris. Some individuals may have involvement of the upper limbs or proximal muscles. Muscle biopsy reveals presence of rimmed vacuoles.</description>
        <dbReference type="MIM" id="605820"/>
    </disease>
    <text>The disease is caused by variants affecting the gene represented in this entry.</text>
</comment>
<comment type="disease" evidence="25 28 29 30 31 32 33">
    <disease id="DI-06867">
        <name>Thrombocytopenia 12 with or without myopathy</name>
        <acronym>THC12</acronym>
        <description>A form of thrombocytopenia, a hematologic disorder defined by a decrease in the number of platelets in circulating blood, resulting in the potential for increased bleeding and decreased ability for clotting. THC12 is an autosomal recessive form manifesting from infancy or early childhood with bleeding episodes. Clinical features include petechiae, easy bruising, epistaxis, hematomas, menorrhagia, and increased bleeding after trauma or surgery. Rare patients may have thrombocytopenia without bleeding. Some affected individuals have myopathic features, usually apparent in the second or third decades of life.</description>
        <dbReference type="MIM" id="620757"/>
    </disease>
    <text>The disease is caused by variants affecting the gene represented in this entry.</text>
</comment>
<comment type="similarity">
    <text evidence="38">In the N-terminal section; belongs to the UDP-N-acetylglucosamine 2-epimerase family.</text>
</comment>
<comment type="similarity">
    <text evidence="38">In the C-terminal section; belongs to the ROK (NagC/XylR) family.</text>
</comment>
<comment type="sequence caution" evidence="38">
    <conflict type="erroneous initiation">
        <sequence resource="EMBL-CDS" id="BAH12414"/>
    </conflict>
    <text>Truncated N-terminus.</text>
</comment>
<keyword id="KW-0002">3D-structure</keyword>
<keyword id="KW-0021">Allosteric enzyme</keyword>
<keyword id="KW-0025">Alternative splicing</keyword>
<keyword id="KW-0067">ATP-binding</keyword>
<keyword id="KW-0963">Cytoplasm</keyword>
<keyword id="KW-0225">Disease variant</keyword>
<keyword id="KW-0378">Hydrolase</keyword>
<keyword id="KW-0418">Kinase</keyword>
<keyword id="KW-0479">Metal-binding</keyword>
<keyword id="KW-0511">Multifunctional enzyme</keyword>
<keyword id="KW-0547">Nucleotide-binding</keyword>
<keyword id="KW-0597">Phosphoprotein</keyword>
<keyword id="KW-1267">Proteomics identification</keyword>
<keyword id="KW-1185">Reference proteome</keyword>
<keyword id="KW-0808">Transferase</keyword>
<keyword id="KW-0862">Zinc</keyword>